<proteinExistence type="evidence at protein level"/>
<evidence type="ECO:0000250" key="1">
    <source>
        <dbReference type="UniProtKB" id="P02463"/>
    </source>
</evidence>
<evidence type="ECO:0000250" key="2">
    <source>
        <dbReference type="UniProtKB" id="Q7SIB2"/>
    </source>
</evidence>
<evidence type="ECO:0000255" key="3">
    <source>
        <dbReference type="PROSITE-ProRule" id="PRU00736"/>
    </source>
</evidence>
<evidence type="ECO:0000256" key="4">
    <source>
        <dbReference type="SAM" id="MobiDB-lite"/>
    </source>
</evidence>
<evidence type="ECO:0000269" key="5">
    <source>
    </source>
</evidence>
<evidence type="ECO:0000269" key="6">
    <source>
    </source>
</evidence>
<evidence type="ECO:0000269" key="7">
    <source>
    </source>
</evidence>
<evidence type="ECO:0000269" key="8">
    <source>
    </source>
</evidence>
<evidence type="ECO:0000269" key="9">
    <source>
    </source>
</evidence>
<evidence type="ECO:0000269" key="10">
    <source>
    </source>
</evidence>
<evidence type="ECO:0000269" key="11">
    <source>
    </source>
</evidence>
<evidence type="ECO:0000269" key="12">
    <source>
    </source>
</evidence>
<evidence type="ECO:0000269" key="13">
    <source>
    </source>
</evidence>
<evidence type="ECO:0000269" key="14">
    <source>
    </source>
</evidence>
<evidence type="ECO:0000269" key="15">
    <source>
    </source>
</evidence>
<evidence type="ECO:0000269" key="16">
    <source>
    </source>
</evidence>
<evidence type="ECO:0000269" key="17">
    <source>
    </source>
</evidence>
<evidence type="ECO:0000269" key="18">
    <source>
    </source>
</evidence>
<evidence type="ECO:0000269" key="19">
    <source>
    </source>
</evidence>
<evidence type="ECO:0000269" key="20">
    <source>
    </source>
</evidence>
<evidence type="ECO:0000269" key="21">
    <source>
    </source>
</evidence>
<evidence type="ECO:0000269" key="22">
    <source>
    </source>
</evidence>
<evidence type="ECO:0000269" key="23">
    <source>
    </source>
</evidence>
<evidence type="ECO:0000269" key="24">
    <source>
    </source>
</evidence>
<evidence type="ECO:0000269" key="25">
    <source>
    </source>
</evidence>
<evidence type="ECO:0000269" key="26">
    <source>
    </source>
</evidence>
<evidence type="ECO:0000269" key="27">
    <source>
    </source>
</evidence>
<evidence type="ECO:0000269" key="28">
    <source>
    </source>
</evidence>
<evidence type="ECO:0000269" key="29">
    <source>
    </source>
</evidence>
<evidence type="ECO:0000269" key="30">
    <source>
    </source>
</evidence>
<evidence type="ECO:0000269" key="31">
    <source>
    </source>
</evidence>
<evidence type="ECO:0000305" key="32"/>
<evidence type="ECO:0000305" key="33">
    <source>
    </source>
</evidence>
<evidence type="ECO:0000305" key="34">
    <source>
    </source>
</evidence>
<evidence type="ECO:0000305" key="35">
    <source>
    </source>
</evidence>
<evidence type="ECO:0000312" key="36">
    <source>
        <dbReference type="HGNC" id="HGNC:2202"/>
    </source>
</evidence>
<evidence type="ECO:0007829" key="37">
    <source>
        <dbReference type="PDB" id="5NAY"/>
    </source>
</evidence>
<name>CO4A1_HUMAN</name>
<accession>P02462</accession>
<accession>A7E2W4</accession>
<accession>B1AM70</accession>
<accession>F5H5K0</accession>
<accession>Q1P9S9</accession>
<accession>Q5VWF6</accession>
<accession>Q86X41</accession>
<accession>Q8NF88</accession>
<accession>Q9NYC5</accession>
<reference key="1">
    <citation type="journal article" date="1989" name="J. Biol. Chem.">
        <title>Structural organization of the gene for the alpha 1 chain of human type IV collagen.</title>
        <authorList>
            <person name="Soininen R."/>
            <person name="Huotari M."/>
            <person name="Ganguly A."/>
            <person name="Prockop D.J."/>
            <person name="Tryggvason K."/>
        </authorList>
    </citation>
    <scope>NUCLEOTIDE SEQUENCE [GENOMIC DNA]</scope>
</reference>
<reference key="2">
    <citation type="journal article" date="2004" name="Nature">
        <title>The DNA sequence and analysis of human chromosome 13.</title>
        <authorList>
            <person name="Dunham A."/>
            <person name="Matthews L.H."/>
            <person name="Burton J."/>
            <person name="Ashurst J.L."/>
            <person name="Howe K.L."/>
            <person name="Ashcroft K.J."/>
            <person name="Beare D.M."/>
            <person name="Burford D.C."/>
            <person name="Hunt S.E."/>
            <person name="Griffiths-Jones S."/>
            <person name="Jones M.C."/>
            <person name="Keenan S.J."/>
            <person name="Oliver K."/>
            <person name="Scott C.E."/>
            <person name="Ainscough R."/>
            <person name="Almeida J.P."/>
            <person name="Ambrose K.D."/>
            <person name="Andrews D.T."/>
            <person name="Ashwell R.I.S."/>
            <person name="Babbage A.K."/>
            <person name="Bagguley C.L."/>
            <person name="Bailey J."/>
            <person name="Bannerjee R."/>
            <person name="Barlow K.F."/>
            <person name="Bates K."/>
            <person name="Beasley H."/>
            <person name="Bird C.P."/>
            <person name="Bray-Allen S."/>
            <person name="Brown A.J."/>
            <person name="Brown J.Y."/>
            <person name="Burrill W."/>
            <person name="Carder C."/>
            <person name="Carter N.P."/>
            <person name="Chapman J.C."/>
            <person name="Clamp M.E."/>
            <person name="Clark S.Y."/>
            <person name="Clarke G."/>
            <person name="Clee C.M."/>
            <person name="Clegg S.C."/>
            <person name="Cobley V."/>
            <person name="Collins J.E."/>
            <person name="Corby N."/>
            <person name="Coville G.J."/>
            <person name="Deloukas P."/>
            <person name="Dhami P."/>
            <person name="Dunham I."/>
            <person name="Dunn M."/>
            <person name="Earthrowl M.E."/>
            <person name="Ellington A.G."/>
            <person name="Faulkner L."/>
            <person name="Frankish A.G."/>
            <person name="Frankland J."/>
            <person name="French L."/>
            <person name="Garner P."/>
            <person name="Garnett J."/>
            <person name="Gilbert J.G.R."/>
            <person name="Gilson C.J."/>
            <person name="Ghori J."/>
            <person name="Grafham D.V."/>
            <person name="Gribble S.M."/>
            <person name="Griffiths C."/>
            <person name="Hall R.E."/>
            <person name="Hammond S."/>
            <person name="Harley J.L."/>
            <person name="Hart E.A."/>
            <person name="Heath P.D."/>
            <person name="Howden P.J."/>
            <person name="Huckle E.J."/>
            <person name="Hunt P.J."/>
            <person name="Hunt A.R."/>
            <person name="Johnson C."/>
            <person name="Johnson D."/>
            <person name="Kay M."/>
            <person name="Kimberley A.M."/>
            <person name="King A."/>
            <person name="Laird G.K."/>
            <person name="Langford C.J."/>
            <person name="Lawlor S."/>
            <person name="Leongamornlert D.A."/>
            <person name="Lloyd D.M."/>
            <person name="Lloyd C."/>
            <person name="Loveland J.E."/>
            <person name="Lovell J."/>
            <person name="Martin S."/>
            <person name="Mashreghi-Mohammadi M."/>
            <person name="McLaren S.J."/>
            <person name="McMurray A."/>
            <person name="Milne S."/>
            <person name="Moore M.J.F."/>
            <person name="Nickerson T."/>
            <person name="Palmer S.A."/>
            <person name="Pearce A.V."/>
            <person name="Peck A.I."/>
            <person name="Pelan S."/>
            <person name="Phillimore B."/>
            <person name="Porter K.M."/>
            <person name="Rice C.M."/>
            <person name="Searle S."/>
            <person name="Sehra H.K."/>
            <person name="Shownkeen R."/>
            <person name="Skuce C.D."/>
            <person name="Smith M."/>
            <person name="Steward C.A."/>
            <person name="Sycamore N."/>
            <person name="Tester J."/>
            <person name="Thomas D.W."/>
            <person name="Tracey A."/>
            <person name="Tromans A."/>
            <person name="Tubby B."/>
            <person name="Wall M."/>
            <person name="Wallis J.M."/>
            <person name="West A.P."/>
            <person name="Whitehead S.L."/>
            <person name="Willey D.L."/>
            <person name="Wilming L."/>
            <person name="Wray P.W."/>
            <person name="Wright M.W."/>
            <person name="Young L."/>
            <person name="Coulson A."/>
            <person name="Durbin R.M."/>
            <person name="Hubbard T."/>
            <person name="Sulston J.E."/>
            <person name="Beck S."/>
            <person name="Bentley D.R."/>
            <person name="Rogers J."/>
            <person name="Ross M.T."/>
        </authorList>
    </citation>
    <scope>NUCLEOTIDE SEQUENCE [LARGE SCALE GENOMIC DNA]</scope>
</reference>
<reference key="3">
    <citation type="journal article" date="2004" name="Genome Res.">
        <title>The status, quality, and expansion of the NIH full-length cDNA project: the Mammalian Gene Collection (MGC).</title>
        <authorList>
            <consortium name="The MGC Project Team"/>
        </authorList>
    </citation>
    <scope>NUCLEOTIDE SEQUENCE [LARGE SCALE MRNA] (ISOFORM 1)</scope>
    <scope>VARIANT HIS-1334</scope>
    <source>
        <tissue>Brain</tissue>
    </source>
</reference>
<reference key="4">
    <citation type="journal article" date="1987" name="Eur. J. Biochem.">
        <title>Completion of the amino acid sequence of the alpha 1 chain of human basement membrane collagen (type IV) reveals 21 non-triplet interruptions located within the collagenous domain.</title>
        <authorList>
            <person name="Brazel D."/>
            <person name="Oberbaeumer I."/>
            <person name="Dieringer H."/>
            <person name="Babel W."/>
            <person name="Glanville R.W."/>
            <person name="Deutzmann R."/>
            <person name="Kuehn K."/>
        </authorList>
    </citation>
    <scope>NUCLEOTIDE SEQUENCE [MRNA] OF 1-943</scope>
    <source>
        <tissue>Placenta</tissue>
    </source>
</reference>
<reference key="5">
    <citation type="journal article" date="1988" name="J. Biol. Chem.">
        <title>The structural genes for alpha 1 and alpha 2 chains of human type IV collagen are divergently encoded on opposite DNA strands and have an overlapping promoter region.</title>
        <authorList>
            <person name="Soininen R."/>
            <person name="Huotari M."/>
            <person name="Hostikka S.L."/>
            <person name="Prockop D.J."/>
            <person name="Tryggvason K."/>
        </authorList>
    </citation>
    <scope>NUCLEOTIDE SEQUENCE [GENOMIC DNA] OF 1-28</scope>
</reference>
<reference key="6">
    <citation type="journal article" date="1985" name="Eur. J. Biochem.">
        <title>Amino acid sequence of the N-terminal aggregation and cross-linking region (7S domain) of the alpha 1 (IV) chain of human basement membrane collagen.</title>
        <authorList>
            <person name="Glanville R.W."/>
            <person name="Qian R.Q."/>
            <person name="Siebold B."/>
            <person name="Risteli J."/>
            <person name="Kuehn K."/>
        </authorList>
    </citation>
    <scope>PROTEIN SEQUENCE OF 28-243</scope>
</reference>
<reference key="7">
    <citation type="journal article" date="1987" name="FEBS Lett.">
        <title>Complete primary structure of the alpha 1-chain of human basement membrane (type IV) collagen.</title>
        <authorList>
            <person name="Soininen R."/>
            <person name="Haka-Risku T."/>
            <person name="Prockop D.J."/>
            <person name="Tryggvason K."/>
        </authorList>
    </citation>
    <scope>NUCLEOTIDE SEQUENCE [MRNA] OF 46-1257</scope>
    <source>
        <tissue>Placenta</tissue>
    </source>
</reference>
<reference key="8">
    <citation type="journal article" date="1984" name="Eur. J. Biochem.">
        <title>Structure of human-basement-membrane (type IV) collagen. Complete amino-acid sequence of a 914-residue-long pepsin fragment from the alpha 1(IV) chain.</title>
        <authorList>
            <person name="Babel W."/>
            <person name="Glanville R.W."/>
        </authorList>
    </citation>
    <scope>PROTEIN SEQUENCE OF 534-1447</scope>
    <scope>PROLINE HYDROXYLATION</scope>
    <scope>LYSINE HYDROXYLATION</scope>
</reference>
<reference key="9">
    <citation type="journal article" date="1985" name="J. Biol. Chem.">
        <title>cDNA clones coding for the pro-alpha1(IV) chain of human type IV procollagen reveal an unusual homology of amino acid sequences in two halves of the carboxyl-terminal domain.</title>
        <authorList>
            <person name="Pihlajaniemi T."/>
            <person name="Tryggvason K."/>
            <person name="Myers J.C."/>
            <person name="Kurkinen M."/>
            <person name="Lebo R."/>
            <person name="Cheung M.-C."/>
            <person name="Prockop D.J."/>
            <person name="Boyd C.D."/>
        </authorList>
    </citation>
    <scope>NUCLEOTIDE SEQUENCE [MRNA] OF 1256-1669</scope>
</reference>
<reference key="10">
    <citation type="journal article" date="1985" name="Proc. Natl. Acad. Sci. U.S.A.">
        <title>Restricted homology between human alpha 1 type IV and other procollagen chains.</title>
        <authorList>
            <person name="Brinker J.M."/>
            <person name="Gudas L.J."/>
            <person name="Loidl H.R."/>
            <person name="Wang S.-Y."/>
            <person name="Rosenbloom J."/>
            <person name="Kefalides N.A."/>
            <person name="Myers J.C."/>
        </authorList>
    </citation>
    <scope>NUCLEOTIDE SEQUENCE [MRNA] OF 1259-1669</scope>
</reference>
<reference key="11">
    <citation type="journal article" date="1988" name="Eur. J. Biochem.">
        <title>The arrangement of intra- and intermolecular disulfide bonds in the carboxyterminal, non-collagenous aggregation and cross-linking domain of basement-membrane type IV collagen.</title>
        <authorList>
            <person name="Siebold B."/>
            <person name="Deutzmann R."/>
            <person name="Kuehn K."/>
        </authorList>
    </citation>
    <scope>PROTEIN SEQUENCE OF 1441-1669</scope>
    <scope>DISULFIDE BONDS</scope>
    <source>
        <tissue>Placenta</tissue>
    </source>
</reference>
<reference key="12">
    <citation type="journal article" date="2000" name="Cancer Res.">
        <title>Anti-angiogenic cues from vascular basement membrane collagen.</title>
        <authorList>
            <person name="Colorado P.C."/>
            <person name="Torre A."/>
            <person name="Kamphaus G."/>
            <person name="Maeshima Y."/>
            <person name="Hopfer H."/>
            <person name="Takahashi K."/>
            <person name="Volk R."/>
            <person name="Zamborsky E.D."/>
            <person name="Herman S."/>
            <person name="Sarkar P.K."/>
            <person name="Ericksen M.B."/>
            <person name="Dhanabal M."/>
            <person name="Simons M."/>
            <person name="Post M."/>
            <person name="Kufe D.W."/>
            <person name="Weichselbaum R.R."/>
            <person name="Sukhatme V.P."/>
            <person name="Kalluri R."/>
        </authorList>
    </citation>
    <scope>NUCLEOTIDE SEQUENCE [MRNA] OF 1441-1669</scope>
    <scope>FUNCTION OF ARRESTEN</scope>
    <scope>TISSUE SPECIFICITY</scope>
</reference>
<reference key="13">
    <citation type="submission" date="2001-03" db="EMBL/GenBank/DDBJ databases">
        <title>Arresten, a collagen-derived inhibitor of angiogenesis.</title>
        <authorList>
            <person name="Fu J."/>
            <person name="Bai X."/>
            <person name="Wang W."/>
            <person name="Ruan C."/>
        </authorList>
    </citation>
    <scope>NUCLEOTIDE SEQUENCE [MRNA] OF 1441-1669</scope>
</reference>
<reference key="14">
    <citation type="submission" date="2001-07" db="EMBL/GenBank/DDBJ databases">
        <authorList>
            <person name="Peng X."/>
            <person name="Yin B."/>
            <person name="Yuan J."/>
            <person name="Qiang B."/>
        </authorList>
    </citation>
    <scope>NUCLEOTIDE SEQUENCE [MRNA] OF 1441-1669</scope>
</reference>
<reference key="15">
    <citation type="journal article" date="2002" name="Zhonghua Shi Yan Wai Ke Za Zhi">
        <title>Molecular cloning and sequencing of human arresten gene.</title>
        <authorList>
            <person name="Zheng Q.C."/>
            <person name="Song Z.F."/>
            <person name="Zheng Y.W."/>
            <person name="Li Y.Q."/>
            <person name="Shu X."/>
        </authorList>
    </citation>
    <scope>NUCLEOTIDE SEQUENCE [MRNA] OF 1441-1669</scope>
</reference>
<reference key="16">
    <citation type="submission" date="2002-08" db="EMBL/GenBank/DDBJ databases">
        <title>Cloning and expression of arresten in Escherichia coli and Pachia pastoris.</title>
        <authorList>
            <person name="He A.B."/>
        </authorList>
    </citation>
    <scope>NUCLEOTIDE SEQUENCE [MRNA] OF 1441-1669</scope>
</reference>
<reference key="17">
    <citation type="journal article" date="2006" name="Hepatobiliary Pancreat. Dis. Int.">
        <title>Construction of recombinant plasmid and prokaryotic expression in E. coli and biological activity analysis of human placenta arresten gene.</title>
        <authorList>
            <person name="Zheng J.P."/>
            <person name="Tang H.Y."/>
            <person name="Chen X.J."/>
            <person name="Yu B.F."/>
            <person name="Xie J."/>
            <person name="Wu T.C."/>
        </authorList>
    </citation>
    <scope>NUCLEOTIDE SEQUENCE [MRNA] OF 1441-1669</scope>
    <scope>FUNCTION</scope>
    <scope>TISSUE SPECIFICITY</scope>
    <source>
        <tissue>Placenta</tissue>
    </source>
</reference>
<reference key="18">
    <citation type="journal article" date="2005" name="J. Clin. Invest.">
        <title>Human alpha1 type IV collagen NC1 domain exhibits distinct antiangiogenic activity mediated by alpha1beta1 integrin.</title>
        <authorList>
            <person name="Sudhakar A."/>
            <person name="Nyberg P."/>
            <person name="Keshamouni V.G."/>
            <person name="Mannam A.P."/>
            <person name="Li J."/>
            <person name="Sugimoto H."/>
            <person name="Cosgrove D."/>
            <person name="Kalluri R."/>
        </authorList>
    </citation>
    <scope>RETRACTED PAPER</scope>
</reference>
<reference key="19">
    <citation type="journal article" date="2020" name="J. Clin. Invest.">
        <authorList>
            <person name="Sudhakar A."/>
            <person name="Nyberg P."/>
            <person name="Keshamouni V.G."/>
            <person name="Mannam A.P."/>
            <person name="Li J."/>
            <person name="Sugimoto H."/>
            <person name="Cosgrove D."/>
            <person name="Kalluri R."/>
        </authorList>
    </citation>
    <scope>RETRACTION NOTICE OF PUBMED:16151532</scope>
</reference>
<reference key="20">
    <citation type="journal article" date="2008" name="Exp. Cell Res.">
        <title>Characterization of the anti-angiogenic properties of arresten, an alpha1beta1 integrin-dependent collagen-derived tumor suppressor.</title>
        <authorList>
            <person name="Nyberg P."/>
            <person name="Xie L."/>
            <person name="Sugimoto H."/>
            <person name="Colorado P."/>
            <person name="Sund M."/>
            <person name="Holthaus K."/>
            <person name="Sudhakar A."/>
            <person name="Salo T."/>
            <person name="Kalluri R."/>
        </authorList>
    </citation>
    <scope>IDENTIFICATION OF RECEPTOR</scope>
    <scope>FUNCTION OF ARRESTEN</scope>
</reference>
<reference key="21">
    <citation type="journal article" date="2012" name="Ann. Neurol.">
        <title>COL4A1 mutations in patients with sporadic late-onset intracerebral hemorrhage.</title>
        <authorList>
            <person name="Weng Y.C."/>
            <person name="Sonni A."/>
            <person name="Labelle-Dumais C."/>
            <person name="de Leau M."/>
            <person name="Kauffman W.B."/>
            <person name="Jeanne M."/>
            <person name="Biffi A."/>
            <person name="Greenberg S.M."/>
            <person name="Rosand J."/>
            <person name="Gould D.B."/>
        </authorList>
    </citation>
    <scope>INVOLVEMENT IN ICH</scope>
    <scope>VARIANTS ICH LEU-352 AND GLY-538</scope>
    <scope>VARIANTS VAL-144 AND VAL-1531</scope>
    <scope>CHARACTERIZATION OF VARIANTS ICH LEU-352 AND GLY-538</scope>
</reference>
<reference key="22">
    <citation type="journal article" date="2012" name="Dev. Med. Child. Neurol.">
        <title>Childhood presentation of COL4A1 mutations.</title>
        <authorList>
            <person name="Shah S."/>
            <person name="Ellard S."/>
            <person name="Kneen R."/>
            <person name="Lim M."/>
            <person name="Osborne N."/>
            <person name="Rankin J."/>
            <person name="Stoodley N."/>
            <person name="van der Knaap M."/>
            <person name="Whitney A."/>
            <person name="Jardine P."/>
        </authorList>
    </citation>
    <scope>INVOLVEMENT IN BSVD1</scope>
    <scope>VARIANTS BSVD1 ARG-755; ARG-773; ASP-882 AND ARG-1266</scope>
</reference>
<reference key="23">
    <citation type="journal article" date="2013" name="Am. J. Ophthalmol.">
        <title>Variants of anterior segment dysgenesis and cerebral involvement in a large family with a novel COL4A1 mutation.</title>
        <authorList>
            <person name="Rodahl E."/>
            <person name="Knappskog P.M."/>
            <person name="Majewski J."/>
            <person name="Johansson S."/>
            <person name="Telstad W."/>
            <person name="Krakenes J."/>
            <person name="Boman H."/>
        </authorList>
    </citation>
    <scope>INVOLVEMENT IN BSVD1</scope>
    <scope>VARIANT BSVD1 LYS-1627</scope>
</reference>
<reference key="24">
    <citation type="journal article" date="2013" name="Ann. Neurol.">
        <title>Phenotypic spectrum of COL4A1 mutations: porencephaly to schizencephaly.</title>
        <authorList>
            <person name="Yoneda Y."/>
            <person name="Haginoya K."/>
            <person name="Kato M."/>
            <person name="Osaka H."/>
            <person name="Yokochi K."/>
            <person name="Arai H."/>
            <person name="Kakita A."/>
            <person name="Yamamoto T."/>
            <person name="Otsuki Y."/>
            <person name="Shimizu S."/>
            <person name="Wada T."/>
            <person name="Koyama N."/>
            <person name="Mino Y."/>
            <person name="Kondo N."/>
            <person name="Takahashi S."/>
            <person name="Hirabayashi S."/>
            <person name="Takanashi J."/>
            <person name="Okumura A."/>
            <person name="Kumagai T."/>
            <person name="Hirai S."/>
            <person name="Nabetani M."/>
            <person name="Saitoh S."/>
            <person name="Hattori A."/>
            <person name="Yamasaki M."/>
            <person name="Kumakura A."/>
            <person name="Sugo Y."/>
            <person name="Nishiyama K."/>
            <person name="Miyatake S."/>
            <person name="Tsurusaki Y."/>
            <person name="Doi H."/>
            <person name="Miyake N."/>
            <person name="Matsumoto N."/>
            <person name="Saitsu H."/>
        </authorList>
    </citation>
    <scope>INVOLVEMENT IN SCHZ</scope>
    <scope>VARIANTS SCHZC ARG-655; ARG-870; SER-897; SER-948; GLU-1041; GLU-1082; ARG-1326; ASP-1332 AND LYS-1615</scope>
</reference>
<reference key="25">
    <citation type="journal article" date="2014" name="Graefes Arch. Clin. Exp. Ophthalmol.">
        <title>Next generation sequencing uncovers a missense mutation in COL4A1 as the cause of familial retinal arteriolar tortuosity.</title>
        <authorList>
            <person name="Zenteno J.C."/>
            <person name="Crespi J."/>
            <person name="Buentello-Volante B."/>
            <person name="Buil J.A."/>
            <person name="Bassaganyas F."/>
            <person name="Vela-Segarra J.I."/>
            <person name="Diaz-Cascajosa J."/>
            <person name="Marieges M.T."/>
        </authorList>
    </citation>
    <scope>INVOLVEMENT IN RATOR</scope>
    <scope>VARIANT RATOR ARG-510</scope>
</reference>
<reference key="26">
    <citation type="journal article" date="2014" name="Clin. Genet.">
        <title>Whole exome analysis identifies dominant COL4A1 mutations in patients with complex ocular phenotypes involving microphthalmia.</title>
        <authorList>
            <person name="Deml B."/>
            <person name="Reis L.M."/>
            <person name="Maheshwari M."/>
            <person name="Griffis C."/>
            <person name="Bick D."/>
            <person name="Semina E.V."/>
        </authorList>
    </citation>
    <scope>INVOLVEMENT IN BSVD1</scope>
    <scope>VARIANTS BSVD1 ARG-708 AND ARG-773</scope>
</reference>
<reference key="27">
    <citation type="journal article" date="2016" name="Ann. Neurol.">
        <title>Disruption of a miR-29 binding site leading to COL4A1 upregulation causes pontine autosomal dominant microangiopathy with leukoencephalopathy.</title>
        <authorList>
            <person name="Verdura E."/>
            <person name="Herve D."/>
            <person name="Bergametti F."/>
            <person name="Jacquet C."/>
            <person name="Morvan T."/>
            <person name="Prieto-Morin C."/>
            <person name="Mackowiak A."/>
            <person name="Manchon E."/>
            <person name="Hosseini H."/>
            <person name="Cordonnier C."/>
            <person name="Girard-Buttaz I."/>
            <person name="Rosenstingl S."/>
            <person name="Hagel C."/>
            <person name="Kuhlenbauemer G."/>
            <person name="Leca-Radu E."/>
            <person name="Goux D."/>
            <person name="Fleming L."/>
            <person name="Van Agtmael T."/>
            <person name="Chabriat H."/>
            <person name="Chapon F."/>
            <person name="Tournier-Lasserve E."/>
        </authorList>
    </citation>
    <scope>INVOLVEMENT IN PADMAL</scope>
</reference>
<reference key="28">
    <citation type="journal article" date="2017" name="Brain">
        <title>Multi-infarct dementia of Swedish type is caused by a 3'UTR mutation of COL4A1.</title>
        <authorList>
            <person name="Siitonen M."/>
            <person name="Boerjesson-Hanson A."/>
            <person name="Poeyhoenen M."/>
            <person name="Ora A."/>
            <person name="Pasanen P."/>
            <person name="Bras J."/>
            <person name="Kern S."/>
            <person name="Kern J."/>
            <person name="Andersen O."/>
            <person name="Stanescu H."/>
            <person name="Kleta R."/>
            <person name="Baumann M."/>
            <person name="Kalaria R."/>
            <person name="Kalimo H."/>
            <person name="Singleton A."/>
            <person name="Hardy J."/>
            <person name="Viitanen M."/>
            <person name="Myllykangas L."/>
            <person name="Guerreiro R."/>
        </authorList>
    </citation>
    <scope>INVOLVEMENT IN PADMAL</scope>
</reference>
<reference key="29">
    <citation type="journal article" date="2002" name="Proc. Natl. Acad. Sci. U.S.A.">
        <title>The 1.9-A crystal structure of the noncollagenous (NC1) domain of human placenta collagen IV shows stabilization via a novel type of covalent Met-Lys cross-link.</title>
        <authorList>
            <person name="Than M.E."/>
            <person name="Henrich S."/>
            <person name="Huber R."/>
            <person name="Ries A."/>
            <person name="Mann K."/>
            <person name="Kuhn K."/>
            <person name="Timpl R."/>
            <person name="Bourenkov G.P."/>
            <person name="Bartunik H.D."/>
            <person name="Bode W."/>
        </authorList>
    </citation>
    <scope>X-RAY CRYSTALLOGRAPHY (1.9 ANGSTROMS) OF 1441-1669</scope>
    <scope>ADDITIONAL INTERCHAIN LINKS</scope>
</reference>
<reference key="30">
    <citation type="journal article" date="2005" name="Science">
        <title>Mutations in Col4a1 cause perinatal cerebral hemorrhage and porencephaly.</title>
        <authorList>
            <person name="Gould D.B."/>
            <person name="Phalan F.C."/>
            <person name="Breedveld G.J."/>
            <person name="van Mil S.E."/>
            <person name="Smith R.S."/>
            <person name="Schimenti J.C."/>
            <person name="Aguglia U."/>
            <person name="van der Knaap M.S."/>
            <person name="Heutink P."/>
            <person name="John S.W.M."/>
        </authorList>
    </citation>
    <scope>VARIANTS BSVD1 SER-749 AND ARG-1236</scope>
</reference>
<reference key="31">
    <citation type="journal article" date="2006" name="J. Med. Genet.">
        <title>Novel mutations in three families confirm a major role of COL4A1 in hereditary porencephaly.</title>
        <authorList>
            <person name="Breedveld G."/>
            <person name="de Coo I.F."/>
            <person name="Lequin M.H."/>
            <person name="Arts W.F.M."/>
            <person name="Heutink P."/>
            <person name="Gould D.B."/>
            <person name="John S.W.M."/>
            <person name="Oostra B."/>
            <person name="Mancini G.M.S."/>
        </authorList>
    </citation>
    <scope>VARIANTS BSVD1 ASP-1130 AND ARG-1423</scope>
</reference>
<reference key="32">
    <citation type="journal article" date="2006" name="N. Engl. J. Med.">
        <title>Role of COL4A1 in small-vessel disease and hemorrhagic stroke.</title>
        <authorList>
            <person name="Gould D.B."/>
            <person name="Phalan F.C."/>
            <person name="van Mil S.E."/>
            <person name="Sundberg J.P."/>
            <person name="Vahedi K."/>
            <person name="Massin P."/>
            <person name="Bousser M.G."/>
            <person name="Heutink P."/>
            <person name="Miner J.H."/>
            <person name="Tournier-Lasserve E."/>
            <person name="John S.W.M."/>
        </authorList>
    </citation>
    <scope>VARIANT BSVD1 GLU-562</scope>
</reference>
<reference key="33">
    <citation type="journal article" date="2007" name="Ann. Neurol.">
        <title>COL4A1 mutation in Axenfeld-Rieger anomaly with leukoencephalopathy and stroke.</title>
        <authorList>
            <person name="Sibon I."/>
            <person name="Coupry I."/>
            <person name="Menegon P."/>
            <person name="Bouchet J.P."/>
            <person name="Gorry P."/>
            <person name="Burgelin I."/>
            <person name="Calvas P."/>
            <person name="Orignac I."/>
            <person name="Dousset V."/>
            <person name="Lacombe D."/>
            <person name="Orgogozo J.M."/>
            <person name="Arveiler B."/>
            <person name="Goizet C."/>
        </authorList>
    </citation>
    <scope>VARIANT BSVD1 ASP-720</scope>
</reference>
<reference key="34">
    <citation type="journal article" date="2007" name="N. Engl. J. Med.">
        <title>COL4A1 mutations and hereditary angiopathy, nephropathy, aneurysms, and muscle cramps.</title>
        <authorList>
            <person name="Plaisier E."/>
            <person name="Gribouval O."/>
            <person name="Alamowitch S."/>
            <person name="Mougenot B."/>
            <person name="Prost C."/>
            <person name="Verpont M.C."/>
            <person name="Marro B."/>
            <person name="Desmettre T."/>
            <person name="Cohen S.Y."/>
            <person name="Roullet E."/>
            <person name="Dracon M."/>
            <person name="Fardeau M."/>
            <person name="Van Agtmael T."/>
            <person name="Kerjaschki D."/>
            <person name="Antignac C."/>
            <person name="Ronco P."/>
        </authorList>
    </citation>
    <scope>VARIANTS HANAC VAL-498; ARG-519 AND GLU-528</scope>
</reference>
<reference key="35">
    <citation type="journal article" date="2007" name="Stroke">
        <title>COL4A1 mutation in a patient with sporadic, recurrent intracerebral hemorrhage.</title>
        <authorList>
            <person name="Vahedi K."/>
            <person name="Kubis N."/>
            <person name="Boukobza M."/>
            <person name="Arnoult M."/>
            <person name="Massin P."/>
            <person name="Tournier-Lasserve E."/>
            <person name="Bousser M.G."/>
        </authorList>
    </citation>
    <scope>VARIANT BSVD1 ARG-805</scope>
</reference>
<reference key="36">
    <citation type="journal article" date="2009" name="Ann. Neurol.">
        <title>COL4A1 mutation in two preterm siblings with antenatal onset of parenchymal hemorrhage.</title>
        <authorList>
            <person name="de Vries L.S."/>
            <person name="Koopman C."/>
            <person name="Groenendaal F."/>
            <person name="Van Schooneveld M."/>
            <person name="Verheijen F.W."/>
            <person name="Verbeek E."/>
            <person name="Witkamp T.D."/>
            <person name="van der Worp H.B."/>
            <person name="Mancini G."/>
        </authorList>
    </citation>
    <scope>VARIANT BSVD1 ARG-1580</scope>
</reference>
<reference key="37">
    <citation type="journal article" date="2010" name="Am. J. Med. Genet. A">
        <title>Novel COL4A1 mutations associated with HANAC syndrome: a role for the triple helical CB3[IV] domain.</title>
        <authorList>
            <person name="Plaisier E."/>
            <person name="Chen Z."/>
            <person name="Gekeler F."/>
            <person name="Benhassine S."/>
            <person name="Dahan K."/>
            <person name="Marro B."/>
            <person name="Alamowitch S."/>
            <person name="Paques M."/>
            <person name="Ronco P."/>
        </authorList>
    </citation>
    <scope>VARIANTS HANAC ARG-498; ARG-510 AND LEU-525</scope>
</reference>
<reference key="38">
    <citation type="journal article" date="2010" name="Arch. Ophthalmol.">
        <title>Ophthalmological features associated with COL4A1 mutations.</title>
        <authorList>
            <person name="Coupry I."/>
            <person name="Sibon I."/>
            <person name="Mortemousque B."/>
            <person name="Rouanet F."/>
            <person name="Mine M."/>
            <person name="Goizet C."/>
        </authorList>
    </citation>
    <scope>VARIANTS BSVD1 ASP-720 AND ARG-755</scope>
</reference>
<reference key="39">
    <citation type="journal article" date="2010" name="Eur. J. Paediatr. Neurol.">
        <title>A dominantly inherited mutation in collagen IV A1 (COL4A1) causing childhood onset stroke without porencephaly.</title>
        <authorList>
            <person name="Shah S."/>
            <person name="Kumar Y."/>
            <person name="McLean B."/>
            <person name="Churchill A."/>
            <person name="Stoodley N."/>
            <person name="Rankin J."/>
            <person name="Rizzu P."/>
            <person name="van der Knaap M."/>
            <person name="Jardine P."/>
        </authorList>
    </citation>
    <scope>VARIANT BSVD1 ARG-755</scope>
</reference>
<reference key="40">
    <citation type="journal article" date="2011" name="Mol. Vis.">
        <title>Sequence variants in COL4A1 and COL4A2 genes in Ecuadorian families with keratoconus.</title>
        <authorList>
            <person name="Karolak J.A."/>
            <person name="Kulinska K."/>
            <person name="Nowak D.M."/>
            <person name="Pitarque J.A."/>
            <person name="Molinari A."/>
            <person name="Rydzanicz M."/>
            <person name="Bejjani B.A."/>
            <person name="Gajecka M."/>
        </authorList>
    </citation>
    <scope>VARIANTS LEU-7 AND HIS-1334</scope>
</reference>
<comment type="function">
    <text evidence="1">Type IV collagen is the major structural component of glomerular basement membranes (GBM), forming a 'chicken-wire' meshwork together with laminins, proteoglycans and entactin/nidogen.</text>
</comment>
<comment type="function">
    <text evidence="5 15">Arresten, comprising the C-terminal NC1 domain, inhibits angiogenesis and tumor formation. The C-terminal half is found to possess the anti-angiogenic activity. Specifically inhibits endothelial cell proliferation, migration and tube formation.</text>
</comment>
<comment type="subunit">
    <text evidence="1 2">There are six type IV collagen isoforms, alpha 1(IV)-alpha 6(IV), each of which can form a triple helix structure with 2 other chains to generate type IV collagen network. Interacts with EFEMP2 (By similarity).</text>
</comment>
<comment type="interaction">
    <interactant intactId="EBI-2432478">
        <id>P02462</id>
    </interactant>
    <interactant intactId="EBI-2432506">
        <id>P08572</id>
        <label>COL4A2</label>
    </interactant>
    <organismsDiffer>false</organismsDiffer>
    <experiments>2</experiments>
</comment>
<comment type="subcellular location">
    <subcellularLocation>
        <location evidence="1">Secreted</location>
        <location evidence="1">Extracellular space</location>
        <location evidence="1">Extracellular matrix</location>
        <location evidence="1">Basement membrane</location>
    </subcellularLocation>
</comment>
<comment type="alternative products">
    <event type="alternative splicing"/>
    <isoform>
        <id>P02462-1</id>
        <name>1</name>
        <sequence type="displayed"/>
    </isoform>
    <isoform>
        <id>P02462-2</id>
        <name>2</name>
        <sequence type="described" ref="VSP_059564 VSP_059565"/>
    </isoform>
</comment>
<comment type="tissue specificity">
    <text evidence="5 10">Highly expressed in placenta.</text>
</comment>
<comment type="domain">
    <text evidence="1 32">Alpha chains of type IV collagen have a non-collagenous domain (NC1) at their C-terminus, frequent interruptions of the G-X-Y repeats in the long central triple-helical domain (which may cause flexibility in the triple helix), and a short N-terminal triple-helical 7S domain. NC1 domain mediates hexamerization of alpha chains of type IV collagen (By similarity).</text>
</comment>
<comment type="PTM">
    <text evidence="31">Lysines at the third position of the tripeptide repeating unit (G-X-Y) are hydroxylated. The modified lysines can be O-glycosylated.</text>
</comment>
<comment type="PTM">
    <text evidence="1 35">Contains 4-hydroxyproline (Probable). Prolines at the third position of the tripeptide repeating unit (G-X-Y) are hydroxylated in some or all of the chains (By similarity).</text>
</comment>
<comment type="PTM">
    <text evidence="1 2">Contains 3-hydroxyproline. This modification occurs on the first proline residue in the sequence motif Gly-Pro-Hyp, where Hyp is 4-hydroxyproline.</text>
</comment>
<comment type="PTM">
    <text evidence="29 32">Type IV collagens contain numerous cysteine residues which are involved in inter- and intramolecular disulfide bonding (PubMed:2844531). 12 of these, located in the NC1 domain, are conserved in all known type IV collagens.</text>
</comment>
<comment type="PTM">
    <text evidence="1 6">The trimeric structure of the NC1 domains is stabilized by covalent bonds (sulfilimine cross-links) between Lys and Met residues (PubMed:12011424). These cross-links are important for the mechanical stability of the basement membrane (By similarity). Sulfilimine cross-link is catalyzed by PXDN (By similarity).</text>
</comment>
<comment type="PTM">
    <text evidence="5">Proteolytic processing produces the C-terminal NC1 peptide, arresten.</text>
</comment>
<comment type="disease" evidence="14 19">
    <disease id="DI-01710">
        <name>Hereditary angiopathy with nephropathy aneurysms and muscle cramps</name>
        <acronym>HANAC</acronym>
        <description>The clinical renal manifestations include hematuria and bilateral large cysts. Histologic analysis revealed complex basement membrane defects in kidney and skin. The systemic angiopathy appears to affect both small vessels and large arteries.</description>
        <dbReference type="MIM" id="611773"/>
    </disease>
    <text>The disease is caused by variants affecting the gene represented in this entry.</text>
</comment>
<comment type="disease" evidence="8 9 11 12 13 16 17 18 22 24 25">
    <disease id="DI-02182">
        <name>Brain small vessel disease 1 with or without ocular anomalies</name>
        <acronym>BSVD1</acronym>
        <description>An autosomal dominant cerebrovascular disorder with variable manifestations reflecting the location and severity of the vascular defect. BSVD1 features include cerebral hemorrage, unilateral fluid-filled cysts or cavities within the cerebral hemispheres, leukoencephalopathy, hemiplegia, seizures, intellectual disability, and facial paresis. Affected individuals may manifest variable visual defects and ocular anomalies.</description>
        <dbReference type="MIM" id="175780"/>
    </disease>
    <text>The disease is caused by variants affecting the gene represented in this entry.</text>
</comment>
<comment type="disease" evidence="21">
    <disease id="DI-03406">
        <name>Intracerebral hemorrhage</name>
        <acronym>ICH</acronym>
        <description>A pathological condition characterized by bleeding into one or both cerebral hemispheres including the basal ganglia and the cerebral cortex. It is often associated with hypertension and craniocerebral trauma. Intracerebral bleeding is a common cause of stroke.</description>
        <dbReference type="MIM" id="614519"/>
    </disease>
    <text>Disease susceptibility is associated with variants affecting the gene represented in this entry.</text>
</comment>
<comment type="disease" evidence="26">
    <disease id="DI-04437">
        <name>Tortuosity of retinal arteries</name>
        <acronym>RATOR</acronym>
        <description>A disease characterized by marked tortuosity of second- and third-order retinal arteries with normal first-order arteries and venous system. Most patients manifest variable degrees of symptomatic transient vision loss due to retinal hemorrhage following minor stress or trauma.</description>
        <dbReference type="MIM" id="180000"/>
    </disease>
    <text>The disease is caused by variants affecting the gene represented in this entry.</text>
</comment>
<comment type="disease" evidence="23">
    <disease id="DI-02284">
        <name>Schizencephaly</name>
        <acronym>SCHZC</acronym>
        <description>Extremely rare human congenital disorder characterized by a full-thickness cleft within the cerebral hemispheres. These clefts are lined with gray matter and most commonly involve the parasylvian regions. Large portions of the cerebral hemispheres may be absent and replaced by cerebro-spinal fluid.</description>
        <dbReference type="MIM" id="269160"/>
    </disease>
    <text>The disease is caused by variants affecting the gene represented in this entry.</text>
</comment>
<comment type="disease" evidence="27 28">
    <disease id="DI-05644">
        <name>Microangiopathy and leukoencephalopathy, pontine, autosomal dominant</name>
        <acronym>PADMAL</acronym>
        <description>A form of cerebral small vessel disease characterized by the recurrence of ischemic strokes starting in the thirties or forties, and associated with progressive imbalance and cognitive impairment. MRI examination shows ischemic lacunas in the pons and cerebral hemispheres, and diffuse leukoencephalopathy affecting various brain regions.</description>
        <dbReference type="MIM" id="618564"/>
    </disease>
    <text evidence="27">The disease is caused by variants affecting the gene represented in this entry. Causative mutations affect a binding site for miR-29 microRNA located within the 3'UTR of COL4A1 and lead to an up-regulation of this gene.</text>
</comment>
<comment type="similarity">
    <text evidence="3">Belongs to the type IV collagen family.</text>
</comment>
<comment type="caution">
    <text evidence="33 34">Was shown to inhibit expression of hypoxia-inducible factor 1alpha and ERK1/2 and p38 MAPK activation, and to function as a ligand for alpha1/beta1 integrin. However, this study was later retracted.</text>
</comment>
<dbReference type="EMBL" id="M26576">
    <property type="protein sequence ID" value="AAA53098.1"/>
    <property type="molecule type" value="Genomic_DNA"/>
</dbReference>
<dbReference type="EMBL" id="J04217">
    <property type="protein sequence ID" value="AAA53098.1"/>
    <property type="status" value="JOINED"/>
    <property type="molecule type" value="Genomic_DNA"/>
</dbReference>
<dbReference type="EMBL" id="M26550">
    <property type="protein sequence ID" value="AAA53098.1"/>
    <property type="status" value="JOINED"/>
    <property type="molecule type" value="Genomic_DNA"/>
</dbReference>
<dbReference type="EMBL" id="M26540">
    <property type="protein sequence ID" value="AAA53098.1"/>
    <property type="status" value="JOINED"/>
    <property type="molecule type" value="Genomic_DNA"/>
</dbReference>
<dbReference type="EMBL" id="M26542">
    <property type="protein sequence ID" value="AAA53098.1"/>
    <property type="status" value="JOINED"/>
    <property type="molecule type" value="Genomic_DNA"/>
</dbReference>
<dbReference type="EMBL" id="M26543">
    <property type="protein sequence ID" value="AAA53098.1"/>
    <property type="status" value="JOINED"/>
    <property type="molecule type" value="Genomic_DNA"/>
</dbReference>
<dbReference type="EMBL" id="M26544">
    <property type="protein sequence ID" value="AAA53098.1"/>
    <property type="status" value="JOINED"/>
    <property type="molecule type" value="Genomic_DNA"/>
</dbReference>
<dbReference type="EMBL" id="M26545">
    <property type="protein sequence ID" value="AAA53098.1"/>
    <property type="status" value="JOINED"/>
    <property type="molecule type" value="Genomic_DNA"/>
</dbReference>
<dbReference type="EMBL" id="M26546">
    <property type="protein sequence ID" value="AAA53098.1"/>
    <property type="status" value="JOINED"/>
    <property type="molecule type" value="Genomic_DNA"/>
</dbReference>
<dbReference type="EMBL" id="M26547">
    <property type="protein sequence ID" value="AAA53098.1"/>
    <property type="status" value="JOINED"/>
    <property type="molecule type" value="Genomic_DNA"/>
</dbReference>
<dbReference type="EMBL" id="M26537">
    <property type="protein sequence ID" value="AAA53098.1"/>
    <property type="status" value="JOINED"/>
    <property type="molecule type" value="Genomic_DNA"/>
</dbReference>
<dbReference type="EMBL" id="M26538">
    <property type="protein sequence ID" value="AAA53098.1"/>
    <property type="status" value="JOINED"/>
    <property type="molecule type" value="Genomic_DNA"/>
</dbReference>
<dbReference type="EMBL" id="M26548">
    <property type="protein sequence ID" value="AAA53098.1"/>
    <property type="status" value="JOINED"/>
    <property type="molecule type" value="Genomic_DNA"/>
</dbReference>
<dbReference type="EMBL" id="M26549">
    <property type="protein sequence ID" value="AAA53098.1"/>
    <property type="status" value="JOINED"/>
    <property type="molecule type" value="Genomic_DNA"/>
</dbReference>
<dbReference type="EMBL" id="M26551">
    <property type="protein sequence ID" value="AAA53098.1"/>
    <property type="status" value="JOINED"/>
    <property type="molecule type" value="Genomic_DNA"/>
</dbReference>
<dbReference type="EMBL" id="M26552">
    <property type="protein sequence ID" value="AAA53098.1"/>
    <property type="status" value="JOINED"/>
    <property type="molecule type" value="Genomic_DNA"/>
</dbReference>
<dbReference type="EMBL" id="M26553">
    <property type="protein sequence ID" value="AAA53098.1"/>
    <property type="status" value="JOINED"/>
    <property type="molecule type" value="Genomic_DNA"/>
</dbReference>
<dbReference type="EMBL" id="M26554">
    <property type="protein sequence ID" value="AAA53098.1"/>
    <property type="status" value="JOINED"/>
    <property type="molecule type" value="Genomic_DNA"/>
</dbReference>
<dbReference type="EMBL" id="M26555">
    <property type="protein sequence ID" value="AAA53098.1"/>
    <property type="status" value="JOINED"/>
    <property type="molecule type" value="Genomic_DNA"/>
</dbReference>
<dbReference type="EMBL" id="M26556">
    <property type="protein sequence ID" value="AAA53098.1"/>
    <property type="status" value="JOINED"/>
    <property type="molecule type" value="Genomic_DNA"/>
</dbReference>
<dbReference type="EMBL" id="M26557">
    <property type="protein sequence ID" value="AAA53098.1"/>
    <property type="status" value="JOINED"/>
    <property type="molecule type" value="Genomic_DNA"/>
</dbReference>
<dbReference type="EMBL" id="M26539">
    <property type="protein sequence ID" value="AAA53098.1"/>
    <property type="status" value="JOINED"/>
    <property type="molecule type" value="Genomic_DNA"/>
</dbReference>
<dbReference type="EMBL" id="M26558">
    <property type="protein sequence ID" value="AAA53098.1"/>
    <property type="status" value="JOINED"/>
    <property type="molecule type" value="Genomic_DNA"/>
</dbReference>
<dbReference type="EMBL" id="M26559">
    <property type="protein sequence ID" value="AAA53098.1"/>
    <property type="status" value="JOINED"/>
    <property type="molecule type" value="Genomic_DNA"/>
</dbReference>
<dbReference type="EMBL" id="M26560">
    <property type="protein sequence ID" value="AAA53098.1"/>
    <property type="status" value="JOINED"/>
    <property type="molecule type" value="Genomic_DNA"/>
</dbReference>
<dbReference type="EMBL" id="M26561">
    <property type="protein sequence ID" value="AAA53098.1"/>
    <property type="status" value="JOINED"/>
    <property type="molecule type" value="Genomic_DNA"/>
</dbReference>
<dbReference type="EMBL" id="M26562">
    <property type="protein sequence ID" value="AAA53098.1"/>
    <property type="status" value="JOINED"/>
    <property type="molecule type" value="Genomic_DNA"/>
</dbReference>
<dbReference type="EMBL" id="M26536">
    <property type="protein sequence ID" value="AAA53098.1"/>
    <property type="status" value="JOINED"/>
    <property type="molecule type" value="Genomic_DNA"/>
</dbReference>
<dbReference type="EMBL" id="M26563">
    <property type="protein sequence ID" value="AAA53098.1"/>
    <property type="status" value="JOINED"/>
    <property type="molecule type" value="Genomic_DNA"/>
</dbReference>
<dbReference type="EMBL" id="M26541">
    <property type="protein sequence ID" value="AAA53098.1"/>
    <property type="status" value="JOINED"/>
    <property type="molecule type" value="Genomic_DNA"/>
</dbReference>
<dbReference type="EMBL" id="M26564">
    <property type="protein sequence ID" value="AAA53098.1"/>
    <property type="status" value="JOINED"/>
    <property type="molecule type" value="Genomic_DNA"/>
</dbReference>
<dbReference type="EMBL" id="M26565">
    <property type="protein sequence ID" value="AAA53098.1"/>
    <property type="status" value="JOINED"/>
    <property type="molecule type" value="Genomic_DNA"/>
</dbReference>
<dbReference type="EMBL" id="M26566">
    <property type="protein sequence ID" value="AAA53098.1"/>
    <property type="status" value="JOINED"/>
    <property type="molecule type" value="Genomic_DNA"/>
</dbReference>
<dbReference type="EMBL" id="M26567">
    <property type="protein sequence ID" value="AAA53098.1"/>
    <property type="status" value="JOINED"/>
    <property type="molecule type" value="Genomic_DNA"/>
</dbReference>
<dbReference type="EMBL" id="M26568">
    <property type="protein sequence ID" value="AAA53098.1"/>
    <property type="status" value="JOINED"/>
    <property type="molecule type" value="Genomic_DNA"/>
</dbReference>
<dbReference type="EMBL" id="M26569">
    <property type="protein sequence ID" value="AAA53098.1"/>
    <property type="status" value="JOINED"/>
    <property type="molecule type" value="Genomic_DNA"/>
</dbReference>
<dbReference type="EMBL" id="M26570">
    <property type="protein sequence ID" value="AAA53098.1"/>
    <property type="status" value="JOINED"/>
    <property type="molecule type" value="Genomic_DNA"/>
</dbReference>
<dbReference type="EMBL" id="M26571">
    <property type="protein sequence ID" value="AAA53098.1"/>
    <property type="status" value="JOINED"/>
    <property type="molecule type" value="Genomic_DNA"/>
</dbReference>
<dbReference type="EMBL" id="M26572">
    <property type="protein sequence ID" value="AAA53098.1"/>
    <property type="status" value="JOINED"/>
    <property type="molecule type" value="Genomic_DNA"/>
</dbReference>
<dbReference type="EMBL" id="M26573">
    <property type="protein sequence ID" value="AAA53098.1"/>
    <property type="status" value="JOINED"/>
    <property type="molecule type" value="Genomic_DNA"/>
</dbReference>
<dbReference type="EMBL" id="M26574">
    <property type="protein sequence ID" value="AAA53098.1"/>
    <property type="status" value="JOINED"/>
    <property type="molecule type" value="Genomic_DNA"/>
</dbReference>
<dbReference type="EMBL" id="M26575">
    <property type="protein sequence ID" value="AAA53098.1"/>
    <property type="status" value="JOINED"/>
    <property type="molecule type" value="Genomic_DNA"/>
</dbReference>
<dbReference type="EMBL" id="AL161773">
    <property type="status" value="NOT_ANNOTATED_CDS"/>
    <property type="molecule type" value="Genomic_DNA"/>
</dbReference>
<dbReference type="EMBL" id="AL390755">
    <property type="status" value="NOT_ANNOTATED_CDS"/>
    <property type="molecule type" value="Genomic_DNA"/>
</dbReference>
<dbReference type="EMBL" id="KF455822">
    <property type="status" value="NOT_ANNOTATED_CDS"/>
    <property type="molecule type" value="Genomic_DNA"/>
</dbReference>
<dbReference type="EMBL" id="BC047305">
    <property type="protein sequence ID" value="AAH47305.1"/>
    <property type="molecule type" value="mRNA"/>
</dbReference>
<dbReference type="EMBL" id="BC151220">
    <property type="protein sequence ID" value="AAI51221.1"/>
    <property type="molecule type" value="mRNA"/>
</dbReference>
<dbReference type="EMBL" id="X05561">
    <property type="protein sequence ID" value="CAA29075.1"/>
    <property type="molecule type" value="mRNA"/>
</dbReference>
<dbReference type="EMBL" id="Y00706">
    <property type="protein sequence ID" value="CAA68698.1"/>
    <property type="molecule type" value="mRNA"/>
</dbReference>
<dbReference type="EMBL" id="M10940">
    <property type="protein sequence ID" value="AAA52006.1"/>
    <property type="molecule type" value="mRNA"/>
</dbReference>
<dbReference type="EMBL" id="M11315">
    <property type="protein sequence ID" value="AAA52042.1"/>
    <property type="molecule type" value="mRNA"/>
</dbReference>
<dbReference type="EMBL" id="AF258349">
    <property type="protein sequence ID" value="AAF72630.1"/>
    <property type="molecule type" value="mRNA"/>
</dbReference>
<dbReference type="EMBL" id="AF363672">
    <property type="protein sequence ID" value="AAK53382.1"/>
    <property type="molecule type" value="mRNA"/>
</dbReference>
<dbReference type="EMBL" id="AF400431">
    <property type="protein sequence ID" value="AAK92480.1"/>
    <property type="molecule type" value="mRNA"/>
</dbReference>
<dbReference type="EMBL" id="AY285780">
    <property type="protein sequence ID" value="AAP43112.1"/>
    <property type="molecule type" value="mRNA"/>
</dbReference>
<dbReference type="EMBL" id="AF536207">
    <property type="protein sequence ID" value="AAM97359.1"/>
    <property type="molecule type" value="mRNA"/>
</dbReference>
<dbReference type="EMBL" id="DQ464183">
    <property type="protein sequence ID" value="ABE73157.1"/>
    <property type="molecule type" value="mRNA"/>
</dbReference>
<dbReference type="CCDS" id="CCDS76649.1">
    <molecule id="P02462-2"/>
</dbReference>
<dbReference type="CCDS" id="CCDS9511.1">
    <molecule id="P02462-1"/>
</dbReference>
<dbReference type="PIR" id="S16876">
    <property type="entry name" value="CGHU4B"/>
</dbReference>
<dbReference type="RefSeq" id="NP_001290039.1">
    <molecule id="P02462-2"/>
    <property type="nucleotide sequence ID" value="NM_001303110.2"/>
</dbReference>
<dbReference type="RefSeq" id="NP_001836.3">
    <molecule id="P02462-1"/>
    <property type="nucleotide sequence ID" value="NM_001845.6"/>
</dbReference>
<dbReference type="PDB" id="1LI1">
    <property type="method" value="X-ray"/>
    <property type="resolution" value="1.90 A"/>
    <property type="chains" value="A/B/D/E=1441-1669"/>
</dbReference>
<dbReference type="PDB" id="5NAX">
    <property type="method" value="X-ray"/>
    <property type="resolution" value="2.82 A"/>
    <property type="chains" value="A/B/D/F=1441-1669"/>
</dbReference>
<dbReference type="PDB" id="5NAY">
    <property type="method" value="X-ray"/>
    <property type="resolution" value="1.80 A"/>
    <property type="chains" value="A/B/C/D/E/F=1441-1669"/>
</dbReference>
<dbReference type="PDB" id="6MPX">
    <property type="method" value="X-ray"/>
    <property type="resolution" value="1.90 A"/>
    <property type="chains" value="A=1438-1666"/>
</dbReference>
<dbReference type="PDBsum" id="1LI1"/>
<dbReference type="PDBsum" id="5NAX"/>
<dbReference type="PDBsum" id="5NAY"/>
<dbReference type="PDBsum" id="6MPX"/>
<dbReference type="SMR" id="P02462"/>
<dbReference type="BioGRID" id="107679">
    <property type="interactions" value="37"/>
</dbReference>
<dbReference type="ComplexPortal" id="CPX-1723">
    <property type="entry name" value="Collagen type IV trimer variant 1"/>
</dbReference>
<dbReference type="FunCoup" id="P02462">
    <property type="interactions" value="730"/>
</dbReference>
<dbReference type="IntAct" id="P02462">
    <property type="interactions" value="36"/>
</dbReference>
<dbReference type="MINT" id="P02462"/>
<dbReference type="STRING" id="9606.ENSP00000364979"/>
<dbReference type="ChEMBL" id="CHEMBL2364188"/>
<dbReference type="GlyCosmos" id="P02462">
    <property type="glycosylation" value="3 sites, 1 glycan"/>
</dbReference>
<dbReference type="GlyGen" id="P02462">
    <property type="glycosylation" value="17 sites, 2 O-linked glycans (3 sites)"/>
</dbReference>
<dbReference type="iPTMnet" id="P02462"/>
<dbReference type="PhosphoSitePlus" id="P02462"/>
<dbReference type="SwissPalm" id="P02462"/>
<dbReference type="BioMuta" id="COL4A1"/>
<dbReference type="DMDM" id="125987809"/>
<dbReference type="jPOST" id="P02462"/>
<dbReference type="MassIVE" id="P02462"/>
<dbReference type="PaxDb" id="9606-ENSP00000364979"/>
<dbReference type="PeptideAtlas" id="P02462"/>
<dbReference type="ProteomicsDB" id="26899"/>
<dbReference type="ProteomicsDB" id="51524">
    <molecule id="P02462-1"/>
</dbReference>
<dbReference type="ProteomicsDB" id="51525">
    <molecule id="P02462-2"/>
</dbReference>
<dbReference type="Pumba" id="P02462"/>
<dbReference type="Antibodypedia" id="3436">
    <property type="antibodies" value="800 antibodies from 40 providers"/>
</dbReference>
<dbReference type="DNASU" id="1282"/>
<dbReference type="Ensembl" id="ENST00000375820.10">
    <molecule id="P02462-1"/>
    <property type="protein sequence ID" value="ENSP00000364979.4"/>
    <property type="gene ID" value="ENSG00000187498.17"/>
</dbReference>
<dbReference type="Ensembl" id="ENST00000543140.6">
    <molecule id="P02462-2"/>
    <property type="protein sequence ID" value="ENSP00000443348.1"/>
    <property type="gene ID" value="ENSG00000187498.17"/>
</dbReference>
<dbReference type="GeneID" id="1282"/>
<dbReference type="KEGG" id="hsa:1282"/>
<dbReference type="MANE-Select" id="ENST00000375820.10">
    <property type="protein sequence ID" value="ENSP00000364979.4"/>
    <property type="RefSeq nucleotide sequence ID" value="NM_001845.6"/>
    <property type="RefSeq protein sequence ID" value="NP_001836.3"/>
</dbReference>
<dbReference type="UCSC" id="uc001vqw.4">
    <molecule id="P02462-1"/>
    <property type="organism name" value="human"/>
</dbReference>
<dbReference type="AGR" id="HGNC:2202"/>
<dbReference type="CTD" id="1282"/>
<dbReference type="DisGeNET" id="1282"/>
<dbReference type="GeneCards" id="COL4A1"/>
<dbReference type="GeneReviews" id="COL4A1"/>
<dbReference type="HGNC" id="HGNC:2202">
    <property type="gene designation" value="COL4A1"/>
</dbReference>
<dbReference type="HPA" id="ENSG00000187498">
    <property type="expression patterns" value="Tissue enhanced (placenta)"/>
</dbReference>
<dbReference type="MalaCards" id="COL4A1"/>
<dbReference type="MIM" id="120130">
    <property type="type" value="gene"/>
</dbReference>
<dbReference type="MIM" id="175780">
    <property type="type" value="phenotype"/>
</dbReference>
<dbReference type="MIM" id="180000">
    <property type="type" value="phenotype"/>
</dbReference>
<dbReference type="MIM" id="269160">
    <property type="type" value="phenotype"/>
</dbReference>
<dbReference type="MIM" id="611773">
    <property type="type" value="phenotype"/>
</dbReference>
<dbReference type="MIM" id="614519">
    <property type="type" value="phenotype"/>
</dbReference>
<dbReference type="MIM" id="618564">
    <property type="type" value="phenotype"/>
</dbReference>
<dbReference type="neXtProt" id="NX_P02462"/>
<dbReference type="OpenTargets" id="ENSG00000187498"/>
<dbReference type="Orphanet" id="36383">
    <property type="disease" value="COL4A1/2-related familial vascular leukoencephalopathy"/>
</dbReference>
<dbReference type="Orphanet" id="75326">
    <property type="disease" value="Familial isolated retinal arteriolar tortuosity"/>
</dbReference>
<dbReference type="Orphanet" id="99810">
    <property type="disease" value="Familial porencephaly"/>
</dbReference>
<dbReference type="Orphanet" id="481986">
    <property type="disease" value="Familial schizencephaly"/>
</dbReference>
<dbReference type="Orphanet" id="73229">
    <property type="disease" value="HANAC syndrome"/>
</dbReference>
<dbReference type="Orphanet" id="477749">
    <property type="disease" value="Pontine autosomal dominant microangiopathy with leukoencephalopathy"/>
</dbReference>
<dbReference type="Orphanet" id="899">
    <property type="disease" value="Walker-Warburg syndrome"/>
</dbReference>
<dbReference type="PharmGKB" id="PA26717"/>
<dbReference type="VEuPathDB" id="HostDB:ENSG00000187498"/>
<dbReference type="eggNOG" id="KOG3544">
    <property type="taxonomic scope" value="Eukaryota"/>
</dbReference>
<dbReference type="GeneTree" id="ENSGT00940000157678"/>
<dbReference type="HOGENOM" id="CLU_002023_1_0_1"/>
<dbReference type="InParanoid" id="P02462"/>
<dbReference type="OMA" id="WEPWQAS"/>
<dbReference type="OrthoDB" id="10071882at2759"/>
<dbReference type="PAN-GO" id="P02462">
    <property type="GO annotations" value="4 GO annotations based on evolutionary models"/>
</dbReference>
<dbReference type="PhylomeDB" id="P02462"/>
<dbReference type="TreeFam" id="TF316865"/>
<dbReference type="PathwayCommons" id="P02462"/>
<dbReference type="Reactome" id="R-HSA-1442490">
    <property type="pathway name" value="Collagen degradation"/>
</dbReference>
<dbReference type="Reactome" id="R-HSA-1474244">
    <property type="pathway name" value="Extracellular matrix organization"/>
</dbReference>
<dbReference type="Reactome" id="R-HSA-1650814">
    <property type="pathway name" value="Collagen biosynthesis and modifying enzymes"/>
</dbReference>
<dbReference type="Reactome" id="R-HSA-186797">
    <property type="pathway name" value="Signaling by PDGF"/>
</dbReference>
<dbReference type="Reactome" id="R-HSA-2022090">
    <property type="pathway name" value="Assembly of collagen fibrils and other multimeric structures"/>
</dbReference>
<dbReference type="Reactome" id="R-HSA-216083">
    <property type="pathway name" value="Integrin cell surface interactions"/>
</dbReference>
<dbReference type="Reactome" id="R-HSA-2214320">
    <property type="pathway name" value="Anchoring fibril formation"/>
</dbReference>
<dbReference type="Reactome" id="R-HSA-2243919">
    <property type="pathway name" value="Crosslinking of collagen fibrils"/>
</dbReference>
<dbReference type="Reactome" id="R-HSA-3000157">
    <property type="pathway name" value="Laminin interactions"/>
</dbReference>
<dbReference type="Reactome" id="R-HSA-3000171">
    <property type="pathway name" value="Non-integrin membrane-ECM interactions"/>
</dbReference>
<dbReference type="Reactome" id="R-HSA-3000178">
    <property type="pathway name" value="ECM proteoglycans"/>
</dbReference>
<dbReference type="Reactome" id="R-HSA-3000480">
    <property type="pathway name" value="Scavenging by Class A Receptors"/>
</dbReference>
<dbReference type="Reactome" id="R-HSA-419037">
    <property type="pathway name" value="NCAM1 interactions"/>
</dbReference>
<dbReference type="Reactome" id="R-HSA-8948216">
    <property type="pathway name" value="Collagen chain trimerization"/>
</dbReference>
<dbReference type="SignaLink" id="P02462"/>
<dbReference type="SIGNOR" id="P02462"/>
<dbReference type="BioGRID-ORCS" id="1282">
    <property type="hits" value="10 hits in 1144 CRISPR screens"/>
</dbReference>
<dbReference type="ChiTaRS" id="COL4A1">
    <property type="organism name" value="human"/>
</dbReference>
<dbReference type="EvolutionaryTrace" id="P02462"/>
<dbReference type="GeneWiki" id="Collagen,_type_IV,_alpha_1"/>
<dbReference type="GenomeRNAi" id="1282"/>
<dbReference type="Pharos" id="P02462">
    <property type="development level" value="Tbio"/>
</dbReference>
<dbReference type="PRO" id="PR:P02462"/>
<dbReference type="Proteomes" id="UP000005640">
    <property type="component" value="Chromosome 13"/>
</dbReference>
<dbReference type="RNAct" id="P02462">
    <property type="molecule type" value="protein"/>
</dbReference>
<dbReference type="Bgee" id="ENSG00000187498">
    <property type="expression patterns" value="Expressed in visceral pleura and 205 other cell types or tissues"/>
</dbReference>
<dbReference type="ExpressionAtlas" id="P02462">
    <property type="expression patterns" value="baseline and differential"/>
</dbReference>
<dbReference type="GO" id="GO:0005604">
    <property type="term" value="C:basement membrane"/>
    <property type="evidence" value="ECO:0000305"/>
    <property type="project" value="BHF-UCL"/>
</dbReference>
<dbReference type="GO" id="GO:0005587">
    <property type="term" value="C:collagen type IV trimer"/>
    <property type="evidence" value="ECO:0000315"/>
    <property type="project" value="BHF-UCL"/>
</dbReference>
<dbReference type="GO" id="GO:0062023">
    <property type="term" value="C:collagen-containing extracellular matrix"/>
    <property type="evidence" value="ECO:0007005"/>
    <property type="project" value="UniProtKB"/>
</dbReference>
<dbReference type="GO" id="GO:0005788">
    <property type="term" value="C:endoplasmic reticulum lumen"/>
    <property type="evidence" value="ECO:0000304"/>
    <property type="project" value="Reactome"/>
</dbReference>
<dbReference type="GO" id="GO:0005576">
    <property type="term" value="C:extracellular region"/>
    <property type="evidence" value="ECO:0000304"/>
    <property type="project" value="Reactome"/>
</dbReference>
<dbReference type="GO" id="GO:0005615">
    <property type="term" value="C:extracellular space"/>
    <property type="evidence" value="ECO:0000318"/>
    <property type="project" value="GO_Central"/>
</dbReference>
<dbReference type="GO" id="GO:0005201">
    <property type="term" value="F:extracellular matrix structural constituent"/>
    <property type="evidence" value="ECO:0000315"/>
    <property type="project" value="BHF-UCL"/>
</dbReference>
<dbReference type="GO" id="GO:0030020">
    <property type="term" value="F:extracellular matrix structural constituent conferring tensile strength"/>
    <property type="evidence" value="ECO:0000315"/>
    <property type="project" value="BHF-UCL"/>
</dbReference>
<dbReference type="GO" id="GO:0048407">
    <property type="term" value="F:platelet-derived growth factor binding"/>
    <property type="evidence" value="ECO:0000314"/>
    <property type="project" value="MGI"/>
</dbReference>
<dbReference type="GO" id="GO:0071711">
    <property type="term" value="P:basement membrane organization"/>
    <property type="evidence" value="ECO:0000315"/>
    <property type="project" value="BHF-UCL"/>
</dbReference>
<dbReference type="GO" id="GO:0048514">
    <property type="term" value="P:blood vessel morphogenesis"/>
    <property type="evidence" value="ECO:0000315"/>
    <property type="project" value="BHF-UCL"/>
</dbReference>
<dbReference type="GO" id="GO:0007420">
    <property type="term" value="P:brain development"/>
    <property type="evidence" value="ECO:0000315"/>
    <property type="project" value="BHF-UCL"/>
</dbReference>
<dbReference type="GO" id="GO:0001569">
    <property type="term" value="P:branching involved in blood vessel morphogenesis"/>
    <property type="evidence" value="ECO:0000315"/>
    <property type="project" value="BHF-UCL"/>
</dbReference>
<dbReference type="GO" id="GO:0071230">
    <property type="term" value="P:cellular response to amino acid stimulus"/>
    <property type="evidence" value="ECO:0007669"/>
    <property type="project" value="Ensembl"/>
</dbReference>
<dbReference type="GO" id="GO:0038063">
    <property type="term" value="P:collagen-activated tyrosine kinase receptor signaling pathway"/>
    <property type="evidence" value="ECO:0007669"/>
    <property type="project" value="Ensembl"/>
</dbReference>
<dbReference type="GO" id="GO:0030855">
    <property type="term" value="P:epithelial cell differentiation"/>
    <property type="evidence" value="ECO:0007669"/>
    <property type="project" value="Ensembl"/>
</dbReference>
<dbReference type="GO" id="GO:0007528">
    <property type="term" value="P:neuromuscular junction development"/>
    <property type="evidence" value="ECO:0007669"/>
    <property type="project" value="Ensembl"/>
</dbReference>
<dbReference type="GO" id="GO:0061333">
    <property type="term" value="P:renal tubule morphogenesis"/>
    <property type="evidence" value="ECO:0000315"/>
    <property type="project" value="BHF-UCL"/>
</dbReference>
<dbReference type="GO" id="GO:0061304">
    <property type="term" value="P:retinal blood vessel morphogenesis"/>
    <property type="evidence" value="ECO:0000315"/>
    <property type="project" value="BHF-UCL"/>
</dbReference>
<dbReference type="FunFam" id="2.170.240.10:FF:000001">
    <property type="entry name" value="Collagen IV alpha 1 chain"/>
    <property type="match status" value="1"/>
</dbReference>
<dbReference type="Gene3D" id="2.170.240.10">
    <property type="entry name" value="Collagen IV, non-collagenous"/>
    <property type="match status" value="1"/>
</dbReference>
<dbReference type="InterPro" id="IPR008160">
    <property type="entry name" value="Collagen"/>
</dbReference>
<dbReference type="InterPro" id="IPR001442">
    <property type="entry name" value="Collagen_IV_NC"/>
</dbReference>
<dbReference type="InterPro" id="IPR036954">
    <property type="entry name" value="Collagen_IV_NC_sf"/>
</dbReference>
<dbReference type="InterPro" id="IPR050149">
    <property type="entry name" value="Collagen_superfamily"/>
</dbReference>
<dbReference type="InterPro" id="IPR016187">
    <property type="entry name" value="CTDL_fold"/>
</dbReference>
<dbReference type="PANTHER" id="PTHR24023">
    <property type="entry name" value="COLLAGEN ALPHA"/>
    <property type="match status" value="1"/>
</dbReference>
<dbReference type="PANTHER" id="PTHR24023:SF1019">
    <property type="entry name" value="COLLAGEN ALPHA-5(IV) CHAIN ISOFORM X1"/>
    <property type="match status" value="1"/>
</dbReference>
<dbReference type="Pfam" id="PF01413">
    <property type="entry name" value="C4"/>
    <property type="match status" value="2"/>
</dbReference>
<dbReference type="Pfam" id="PF01391">
    <property type="entry name" value="Collagen"/>
    <property type="match status" value="18"/>
</dbReference>
<dbReference type="SMART" id="SM00111">
    <property type="entry name" value="C4"/>
    <property type="match status" value="2"/>
</dbReference>
<dbReference type="SUPFAM" id="SSF56436">
    <property type="entry name" value="C-type lectin-like"/>
    <property type="match status" value="2"/>
</dbReference>
<dbReference type="PROSITE" id="PS51403">
    <property type="entry name" value="NC1_IV"/>
    <property type="match status" value="1"/>
</dbReference>
<feature type="signal peptide" evidence="30">
    <location>
        <begin position="1"/>
        <end position="27"/>
    </location>
</feature>
<feature type="propeptide" id="PRO_0000005748" description="N-terminal propeptide (7S domain)">
    <location>
        <begin position="28"/>
        <end position="172"/>
    </location>
</feature>
<feature type="chain" id="PRO_0000005749" description="Collagen alpha-1(IV) chain">
    <location>
        <begin position="173"/>
        <end position="1669"/>
    </location>
</feature>
<feature type="chain" id="PRO_0000390482" description="Arresten">
    <location>
        <begin position="1445"/>
        <end position="1669"/>
    </location>
</feature>
<feature type="domain" description="Collagen IV NC1" evidence="3">
    <location>
        <begin position="1445"/>
        <end position="1669"/>
    </location>
</feature>
<feature type="region of interest" description="Disordered" evidence="4">
    <location>
        <begin position="48"/>
        <end position="459"/>
    </location>
</feature>
<feature type="region of interest" description="Triple-helical region">
    <location>
        <begin position="173"/>
        <end position="1440"/>
    </location>
</feature>
<feature type="region of interest" description="Disordered" evidence="4">
    <location>
        <begin position="504"/>
        <end position="1382"/>
    </location>
</feature>
<feature type="region of interest" description="Disordered" evidence="4">
    <location>
        <begin position="1404"/>
        <end position="1431"/>
    </location>
</feature>
<feature type="compositionally biased region" description="Pro residues" evidence="4">
    <location>
        <begin position="196"/>
        <end position="214"/>
    </location>
</feature>
<feature type="compositionally biased region" description="Low complexity" evidence="4">
    <location>
        <begin position="234"/>
        <end position="249"/>
    </location>
</feature>
<feature type="compositionally biased region" description="Basic and acidic residues" evidence="4">
    <location>
        <begin position="250"/>
        <end position="263"/>
    </location>
</feature>
<feature type="compositionally biased region" description="Basic and acidic residues" evidence="4">
    <location>
        <begin position="289"/>
        <end position="298"/>
    </location>
</feature>
<feature type="compositionally biased region" description="Pro residues" evidence="4">
    <location>
        <begin position="367"/>
        <end position="376"/>
    </location>
</feature>
<feature type="compositionally biased region" description="Pro residues" evidence="4">
    <location>
        <begin position="413"/>
        <end position="424"/>
    </location>
</feature>
<feature type="compositionally biased region" description="Pro residues" evidence="4">
    <location>
        <begin position="436"/>
        <end position="448"/>
    </location>
</feature>
<feature type="compositionally biased region" description="Basic and acidic residues" evidence="4">
    <location>
        <begin position="535"/>
        <end position="545"/>
    </location>
</feature>
<feature type="compositionally biased region" description="Gly residues" evidence="4">
    <location>
        <begin position="586"/>
        <end position="595"/>
    </location>
</feature>
<feature type="compositionally biased region" description="Low complexity" evidence="4">
    <location>
        <begin position="611"/>
        <end position="620"/>
    </location>
</feature>
<feature type="compositionally biased region" description="Gly residues" evidence="4">
    <location>
        <begin position="621"/>
        <end position="630"/>
    </location>
</feature>
<feature type="compositionally biased region" description="Gly residues" evidence="4">
    <location>
        <begin position="797"/>
        <end position="817"/>
    </location>
</feature>
<feature type="compositionally biased region" description="Low complexity" evidence="4">
    <location>
        <begin position="856"/>
        <end position="875"/>
    </location>
</feature>
<feature type="compositionally biased region" description="Low complexity" evidence="4">
    <location>
        <begin position="977"/>
        <end position="986"/>
    </location>
</feature>
<feature type="compositionally biased region" description="Gly residues" evidence="4">
    <location>
        <begin position="1011"/>
        <end position="1020"/>
    </location>
</feature>
<feature type="compositionally biased region" description="Low complexity" evidence="4">
    <location>
        <begin position="1086"/>
        <end position="1114"/>
    </location>
</feature>
<feature type="compositionally biased region" description="Pro residues" evidence="4">
    <location>
        <begin position="1247"/>
        <end position="1258"/>
    </location>
</feature>
<feature type="compositionally biased region" description="Gly residues" evidence="4">
    <location>
        <begin position="1290"/>
        <end position="1299"/>
    </location>
</feature>
<feature type="compositionally biased region" description="Low complexity" evidence="4">
    <location>
        <begin position="1368"/>
        <end position="1382"/>
    </location>
</feature>
<feature type="modified residue" description="3-hydroxyproline" evidence="2">
    <location>
        <position position="204"/>
    </location>
</feature>
<feature type="modified residue" description="3-hydroxyproline" evidence="2">
    <location>
        <position position="207"/>
    </location>
</feature>
<feature type="modified residue" description="3-hydroxyproline" evidence="2">
    <location>
        <position position="210"/>
    </location>
</feature>
<feature type="modified residue" description="3-hydroxyproline" evidence="2">
    <location>
        <position position="587"/>
    </location>
</feature>
<feature type="modified residue" description="3-hydroxyproline" evidence="2">
    <location>
        <position position="602"/>
    </location>
</feature>
<feature type="modified residue" description="4-hydroxyproline" evidence="1">
    <location>
        <position position="603"/>
    </location>
</feature>
<feature type="modified residue" description="3-hydroxyproline" evidence="2">
    <location>
        <position position="605"/>
    </location>
</feature>
<feature type="modified residue" description="4-hydroxyproline" evidence="1">
    <location>
        <position position="606"/>
    </location>
</feature>
<feature type="modified residue" description="4-hydroxyproline" evidence="1">
    <location>
        <position position="623"/>
    </location>
</feature>
<feature type="modified residue" description="4-hydroxyproline" evidence="1">
    <location>
        <position position="626"/>
    </location>
</feature>
<feature type="modified residue" description="4-hydroxyproline" evidence="1">
    <location>
        <position position="629"/>
    </location>
</feature>
<feature type="modified residue" description="4-hydroxyproline" evidence="1">
    <location>
        <position position="632"/>
    </location>
</feature>
<feature type="modified residue" description="3-hydroxyproline" evidence="2">
    <location>
        <position position="647"/>
    </location>
</feature>
<feature type="modified residue" description="3-hydroxyproline" evidence="2">
    <location>
        <position position="1214"/>
    </location>
</feature>
<feature type="modified residue" description="3-hydroxyproline" evidence="2">
    <location>
        <position position="1424"/>
    </location>
</feature>
<feature type="glycosylation site" description="N-linked (GlcNAc...) asparagine">
    <location>
        <position position="126"/>
    </location>
</feature>
<feature type="disulfide bond" evidence="3 29">
    <location>
        <begin position="1460"/>
        <end position="1551"/>
    </location>
</feature>
<feature type="disulfide bond" evidence="3 29">
    <location>
        <begin position="1493"/>
        <end position="1548"/>
    </location>
</feature>
<feature type="disulfide bond" evidence="3 29">
    <location>
        <begin position="1505"/>
        <end position="1511"/>
    </location>
</feature>
<feature type="disulfide bond" evidence="3 29">
    <location>
        <begin position="1570"/>
        <end position="1665"/>
    </location>
</feature>
<feature type="disulfide bond" evidence="3 29">
    <location>
        <begin position="1604"/>
        <end position="1662"/>
    </location>
</feature>
<feature type="disulfide bond" evidence="3 29">
    <location>
        <begin position="1616"/>
        <end position="1622"/>
    </location>
</feature>
<feature type="cross-link" description="S-Lysyl-methionine sulfilimine (Met-Lys) (interchain with K-1651)" evidence="6">
    <location>
        <position position="1533"/>
    </location>
</feature>
<feature type="cross-link" description="S-Lysyl-methionine sulfilimine (Lys-Met) (interchain with M-1533)" evidence="6">
    <location>
        <position position="1651"/>
    </location>
</feature>
<feature type="splice variant" id="VSP_059564" description="In isoform 2." evidence="32">
    <original>GPQGTPG</original>
    <variation>LLFQIHK</variation>
    <location>
        <begin position="513"/>
        <end position="519"/>
    </location>
</feature>
<feature type="splice variant" id="VSP_059565" description="In isoform 2." evidence="32">
    <location>
        <begin position="520"/>
        <end position="1669"/>
    </location>
</feature>
<feature type="sequence variant" id="VAR_030027" description="In dbSNP:rs9515185." evidence="20">
    <original>V</original>
    <variation>L</variation>
    <location>
        <position position="7"/>
    </location>
</feature>
<feature type="sequence variant" id="VAR_073809" evidence="21">
    <original>A</original>
    <variation>V</variation>
    <location>
        <position position="144"/>
    </location>
</feature>
<feature type="sequence variant" id="VAR_044158" description="In dbSNP:rs34843786.">
    <original>P</original>
    <variation>L</variation>
    <location>
        <position position="304"/>
    </location>
</feature>
<feature type="sequence variant" id="VAR_073810" description="In ICH; the mutant protein is retained intracellularly and is not secreted normally; dbSNP:rs200786329." evidence="21">
    <original>P</original>
    <variation>L</variation>
    <location>
        <position position="352"/>
    </location>
</feature>
<feature type="sequence variant" id="VAR_064493" description="In HANAC; dbSNP:rs267606744." evidence="19">
    <original>G</original>
    <variation>R</variation>
    <location>
        <position position="498"/>
    </location>
</feature>
<feature type="sequence variant" id="VAR_044159" description="In HANAC; dbSNP:rs113994104." evidence="14">
    <original>G</original>
    <variation>V</variation>
    <location>
        <position position="498"/>
    </location>
</feature>
<feature type="sequence variant" id="VAR_064494" description="In HANAC and RATOR; dbSNP:rs267606743." evidence="19 26">
    <original>G</original>
    <variation>R</variation>
    <location>
        <position position="510"/>
    </location>
</feature>
<feature type="sequence variant" id="VAR_044160" description="In HANAC; dbSNP:rs113994105." evidence="14">
    <original>G</original>
    <variation>R</variation>
    <location>
        <position position="519"/>
    </location>
</feature>
<feature type="sequence variant" id="VAR_064495" description="In HANAC; requires 2 nucleotide substitutions; dbSNP:rs281865426." evidence="19">
    <original>G</original>
    <variation>L</variation>
    <location>
        <position position="525"/>
    </location>
</feature>
<feature type="sequence variant" id="VAR_044161" description="In HANAC; dbSNP:rs113994106." evidence="14">
    <original>G</original>
    <variation>E</variation>
    <location>
        <position position="528"/>
    </location>
</feature>
<feature type="sequence variant" id="VAR_073811" description="In ICH; the mutant protein is retained intracellularly and is not secreted normally; dbSNP:rs397514624." evidence="21">
    <original>R</original>
    <variation>G</variation>
    <location>
        <position position="538"/>
    </location>
</feature>
<feature type="sequence variant" id="VAR_030511" description="In dbSNP:rs536174.">
    <original>P</original>
    <variation>T</variation>
    <location>
        <position position="555"/>
    </location>
</feature>
<feature type="sequence variant" id="VAR_030028" description="In BSVD1; dbSNP:rs121912857." evidence="11">
    <original>G</original>
    <variation>E</variation>
    <location>
        <position position="562"/>
    </location>
</feature>
<feature type="sequence variant" id="VAR_073812" description="In SCHZC." evidence="23">
    <original>G</original>
    <variation>R</variation>
    <location>
        <position position="655"/>
    </location>
</feature>
<feature type="sequence variant" id="VAR_073813" description="In BSVD1; dbSNP:rs672601349." evidence="25">
    <original>G</original>
    <variation>R</variation>
    <location>
        <position position="708"/>
    </location>
</feature>
<feature type="sequence variant" id="VAR_064496" description="In BSVD1; dbSNP:rs113994108." evidence="13 18">
    <original>G</original>
    <variation>D</variation>
    <location>
        <position position="720"/>
    </location>
</feature>
<feature type="sequence variant" id="VAR_030029" description="In BSVD1; dbSNP:rs113994109." evidence="8">
    <original>G</original>
    <variation>S</variation>
    <location>
        <position position="749"/>
    </location>
</feature>
<feature type="sequence variant" id="VAR_064497" description="In BSVD1; dbSNP:rs672601346." evidence="17 18 22">
    <original>G</original>
    <variation>R</variation>
    <location>
        <position position="755"/>
    </location>
</feature>
<feature type="sequence variant" id="VAR_073814" description="In BSVD1; dbSNP:rs672601347." evidence="22 25">
    <original>G</original>
    <variation>R</variation>
    <location>
        <position position="773"/>
    </location>
</feature>
<feature type="sequence variant" id="VAR_064498" description="In BSVD1; dbSNP:rs113994110." evidence="12">
    <original>G</original>
    <variation>R</variation>
    <location>
        <position position="805"/>
    </location>
</feature>
<feature type="sequence variant" id="VAR_073815" description="In SCHZC; dbSNP:rs1877962670." evidence="23">
    <original>G</original>
    <variation>R</variation>
    <location>
        <position position="870"/>
    </location>
</feature>
<feature type="sequence variant" id="VAR_073816" description="In BSVD1." evidence="22">
    <original>G</original>
    <variation>D</variation>
    <location>
        <position position="882"/>
    </location>
</feature>
<feature type="sequence variant" id="VAR_073817" description="In SCHZC." evidence="23">
    <original>G</original>
    <variation>S</variation>
    <location>
        <position position="897"/>
    </location>
</feature>
<feature type="sequence variant" id="VAR_073818" description="In SCHZC; dbSNP:rs1555303073." evidence="23">
    <original>G</original>
    <variation>S</variation>
    <location>
        <position position="948"/>
    </location>
</feature>
<feature type="sequence variant" id="VAR_073819" description="In SCHZC." evidence="23">
    <original>G</original>
    <variation>E</variation>
    <location>
        <position position="1041"/>
    </location>
</feature>
<feature type="sequence variant" id="VAR_073820" description="In SCHZC." evidence="23">
    <original>G</original>
    <variation>E</variation>
    <location>
        <position position="1082"/>
    </location>
</feature>
<feature type="sequence variant" id="VAR_030030" description="In BSVD1; dbSNP:rs113994111." evidence="9">
    <original>G</original>
    <variation>D</variation>
    <location>
        <position position="1130"/>
    </location>
</feature>
<feature type="sequence variant" id="VAR_030031" description="In BSVD1; dbSNP:rs113994112." evidence="8">
    <original>G</original>
    <variation>R</variation>
    <location>
        <position position="1236"/>
    </location>
</feature>
<feature type="sequence variant" id="VAR_073821" description="In BSVD1." evidence="22">
    <original>G</original>
    <variation>R</variation>
    <location>
        <position position="1266"/>
    </location>
</feature>
<feature type="sequence variant" id="VAR_073822" description="In SCHZC; dbSNP:rs587777379." evidence="23">
    <original>G</original>
    <variation>R</variation>
    <location>
        <position position="1326"/>
    </location>
</feature>
<feature type="sequence variant" id="VAR_073823" description="In SCHZC; dbSNP:rs1877331560." evidence="23">
    <original>G</original>
    <variation>D</variation>
    <location>
        <position position="1332"/>
    </location>
</feature>
<feature type="sequence variant" id="VAR_020013" description="In dbSNP:rs3742207." evidence="7 20">
    <original>Q</original>
    <variation>H</variation>
    <location>
        <position position="1334"/>
    </location>
</feature>
<feature type="sequence variant" id="VAR_030032" description="In BSVD1; dbSNP:rs113994113." evidence="9">
    <original>G</original>
    <variation>R</variation>
    <location>
        <position position="1423"/>
    </location>
</feature>
<feature type="sequence variant" id="VAR_073824" description="In dbSNP:rs1343193102." evidence="21">
    <original>M</original>
    <variation>V</variation>
    <location>
        <position position="1531"/>
    </location>
</feature>
<feature type="sequence variant" id="VAR_064499" description="In BSVD1; dbSNP:rs113994114." evidence="16">
    <original>G</original>
    <variation>R</variation>
    <location>
        <position position="1580"/>
    </location>
</feature>
<feature type="sequence variant" id="VAR_073825" description="In SCHZC; dbSNP:rs1876543576." evidence="23">
    <original>E</original>
    <variation>K</variation>
    <location>
        <position position="1615"/>
    </location>
</feature>
<feature type="sequence variant" id="VAR_073826" description="In BSVD1; dbSNP:rs672601348." evidence="24">
    <original>N</original>
    <variation>K</variation>
    <location>
        <position position="1627"/>
    </location>
</feature>
<feature type="sequence conflict" description="In Ref. 6; AA sequence." evidence="32" ref="6">
    <original>SG</original>
    <variation>KE</variation>
    <location>
        <begin position="237"/>
        <end position="238"/>
    </location>
</feature>
<feature type="sequence conflict" description="In Ref. 6; AA sequence." evidence="32" ref="6">
    <original>G</original>
    <variation>K</variation>
    <location>
        <position position="241"/>
    </location>
</feature>
<feature type="sequence conflict" description="In Ref. 4; CAA29075." evidence="32" ref="4">
    <original>Q</original>
    <variation>A</variation>
    <location>
        <position position="319"/>
    </location>
</feature>
<feature type="sequence conflict" description="In Ref. 8; AA sequence." evidence="32" ref="8">
    <original>N</original>
    <variation>D</variation>
    <location>
        <position position="719"/>
    </location>
</feature>
<feature type="sequence conflict" description="In Ref. 8; AA sequence." evidence="32" ref="8">
    <original>D</original>
    <variation>Y</variation>
    <location>
        <position position="837"/>
    </location>
</feature>
<feature type="sequence conflict" description="In Ref. 8; AA sequence." evidence="32" ref="8">
    <original>K</original>
    <variation>P</variation>
    <location>
        <position position="842"/>
    </location>
</feature>
<feature type="sequence conflict" description="In Ref. 7; CAA68698." evidence="32" ref="7">
    <original>V</original>
    <variation>W</variation>
    <location>
        <position position="896"/>
    </location>
</feature>
<feature type="sequence conflict" description="In Ref. 8; AA sequence." evidence="32" ref="8">
    <original>E</original>
    <variation>Q</variation>
    <location>
        <position position="904"/>
    </location>
</feature>
<feature type="sequence conflict" description="In Ref. 8; AA sequence." evidence="32" ref="8">
    <original>S</original>
    <variation>K</variation>
    <location>
        <position position="914"/>
    </location>
</feature>
<feature type="sequence conflict" description="In Ref. 8; AA sequence." evidence="32" ref="8">
    <original>S</original>
    <variation>K</variation>
    <location>
        <position position="998"/>
    </location>
</feature>
<feature type="sequence conflict" description="In Ref. 8; AA sequence." evidence="32" ref="8">
    <original>K</original>
    <variation>P</variation>
    <location>
        <position position="1010"/>
    </location>
</feature>
<feature type="sequence conflict" description="In Ref. 8; AA sequence." evidence="32" ref="8">
    <original>S</original>
    <variation>K</variation>
    <location>
        <position position="1012"/>
    </location>
</feature>
<feature type="sequence conflict" description="In Ref. 8; AA sequence." evidence="32" ref="8">
    <original>E</original>
    <variation>Q</variation>
    <location>
        <position position="1358"/>
    </location>
</feature>
<feature type="sequence conflict" description="In Ref. 17; ABE73157." evidence="32" ref="17">
    <original>A</original>
    <variation>T</variation>
    <location>
        <position position="1490"/>
    </location>
</feature>
<feature type="sequence conflict" description="In Ref. 17; ABE73157." evidence="32" ref="17">
    <original>I</original>
    <variation>T</variation>
    <location>
        <position position="1507"/>
    </location>
</feature>
<feature type="sequence conflict" description="In Ref. 17; ABE73157." evidence="32" ref="17">
    <original>Y</original>
    <variation>C</variation>
    <location>
        <position position="1519"/>
    </location>
</feature>
<feature type="sequence conflict" description="In Ref. 16; AAM97359." evidence="32" ref="16">
    <original>C</original>
    <variation>Y</variation>
    <location>
        <position position="1570"/>
    </location>
</feature>
<feature type="strand" evidence="37">
    <location>
        <begin position="1446"/>
        <end position="1451"/>
    </location>
</feature>
<feature type="strand" evidence="37">
    <location>
        <begin position="1453"/>
        <end position="1456"/>
    </location>
</feature>
<feature type="strand" evidence="37">
    <location>
        <begin position="1465"/>
        <end position="1478"/>
    </location>
</feature>
<feature type="strand" evidence="37">
    <location>
        <begin position="1481"/>
        <end position="1484"/>
    </location>
</feature>
<feature type="helix" evidence="37">
    <location>
        <begin position="1490"/>
        <end position="1492"/>
    </location>
</feature>
<feature type="strand" evidence="37">
    <location>
        <begin position="1493"/>
        <end position="1496"/>
    </location>
</feature>
<feature type="strand" evidence="37">
    <location>
        <begin position="1502"/>
        <end position="1505"/>
    </location>
</feature>
<feature type="strand" evidence="37">
    <location>
        <begin position="1511"/>
        <end position="1514"/>
    </location>
</feature>
<feature type="strand" evidence="37">
    <location>
        <begin position="1519"/>
        <end position="1524"/>
    </location>
</feature>
<feature type="helix" evidence="37">
    <location>
        <begin position="1538"/>
        <end position="1544"/>
    </location>
</feature>
<feature type="strand" evidence="37">
    <location>
        <begin position="1547"/>
        <end position="1555"/>
    </location>
</feature>
<feature type="strand" evidence="37">
    <location>
        <begin position="1557"/>
        <end position="1561"/>
    </location>
</feature>
<feature type="strand" evidence="37">
    <location>
        <begin position="1563"/>
        <end position="1566"/>
    </location>
</feature>
<feature type="strand" evidence="37">
    <location>
        <begin position="1574"/>
        <end position="1587"/>
    </location>
</feature>
<feature type="helix" evidence="37">
    <location>
        <begin position="1589"/>
        <end position="1591"/>
    </location>
</feature>
<feature type="strand" evidence="37">
    <location>
        <begin position="1593"/>
        <end position="1595"/>
    </location>
</feature>
<feature type="helix" evidence="37">
    <location>
        <begin position="1601"/>
        <end position="1603"/>
    </location>
</feature>
<feature type="strand" evidence="37">
    <location>
        <begin position="1604"/>
        <end position="1607"/>
    </location>
</feature>
<feature type="strand" evidence="37">
    <location>
        <begin position="1613"/>
        <end position="1617"/>
    </location>
</feature>
<feature type="strand" evidence="37">
    <location>
        <begin position="1620"/>
        <end position="1623"/>
    </location>
</feature>
<feature type="strand" evidence="37">
    <location>
        <begin position="1629"/>
        <end position="1634"/>
    </location>
</feature>
<feature type="helix" evidence="37">
    <location>
        <begin position="1638"/>
        <end position="1640"/>
    </location>
</feature>
<feature type="strand" evidence="37">
    <location>
        <begin position="1641"/>
        <end position="1643"/>
    </location>
</feature>
<feature type="strand" evidence="37">
    <location>
        <begin position="1648"/>
        <end position="1650"/>
    </location>
</feature>
<feature type="helix" evidence="37">
    <location>
        <begin position="1655"/>
        <end position="1658"/>
    </location>
</feature>
<feature type="strand" evidence="37">
    <location>
        <begin position="1661"/>
        <end position="1667"/>
    </location>
</feature>
<sequence>MGPRLSVWLLLLPAALLLHEEHSRAAAKGGCAGSGCGKCDCHGVKGQKGERGLPGLQGVIGFPGMQGPEGPQGPPGQKGDTGEPGLPGTKGTRGPPGASGYPGNPGLPGIPGQDGPPGPPGIPGCNGTKGERGPLGPPGLPGFAGNPGPPGLPGMKGDPGEILGHVPGMLLKGERGFPGIPGTPGPPGLPGLQGPVGPPGFTGPPGPPGPPGPPGEKGQMGLSFQGPKGDKGDQGVSGPPGVPGQAQVQEKGDFATKGEKGQKGEPGFQGMPGVGEKGEPGKPGPRGKPGKDGDKGEKGSPGFPGEPGYPGLIGRQGPQGEKGEAGPPGPPGIVIGTGPLGEKGERGYPGTPGPRGEPGPKGFPGLPGQPGPPGLPVPGQAGAPGFPGERGEKGDRGFPGTSLPGPSGRDGLPGPPGSPGPPGQPGYTNGIVECQPGPPGDQGPPGIPGQPGFIGEIGEKGQKGESCLICDIDGYRGPPGPQGPPGEIGFPGQPGAKGDRGLPGRDGVAGVPGPQGTPGLIGQPGAKGEPGEFYFDLRLKGDKGDPGFPGQPGMPGRAGSPGRDGHPGLPGPKGSPGSVGLKGERGPPGGVGFPGSRGDTGPPGPPGYGPAGPIGDKGQAGFPGGPGSPGLPGPKGEPGKIVPLPGPPGAEGLPGSPGFPGPQGDRGFPGTPGRPGLPGEKGAVGQPGIGFPGPPGPKGVDGLPGDMGPPGTPGRPGFNGLPGNPGVQGQKGEPGVGLPGLKGLPGLPGIPGTPGEKGSIGVPGVPGEHGAIGPPGLQGIRGEPGPPGLPGSVGSPGVPGIGPPGARGPPGGQGPPGLSGPPGIKGEKGFPGFPGLDMPGPKGDKGAQGLPGITGQSGLPGLPGQQGAPGIPGFPGSKGEMGVMGTPGQPGSPGPVGAPGLPGEKGDHGFPGSSGPRGDPGLKGDKGDVGLPGKPGSMDKVDMGSMKGQKGDQGEKGQIGPIGEKGSRGDPGTPGVPGKDGQAGQPGQPGPKGDPGISGTPGAPGLPGPKGSVGGMGLPGTPGEKGVPGIPGPQGSPGLPGDKGAKGEKGQAGPPGIGIPGLRGEKGDQGIAGFPGSPGEKGEKGSIGIPGMPGSPGLKGSPGSVGYPGSPGLPGEKGDKGLPGLDGIPGVKGEAGLPGTPGPTGPAGQKGEPGSDGIPGSAGEKGEPGLPGRGFPGFPGAKGDKGSKGEVGFPGLAGSPGIPGSKGEQGFMGPPGPQGQPGLPGSPGHATEGPKGDRGPQGQPGLPGLPGPMGPPGLPGIDGVKGDKGNPGWPGAPGVPGPKGDPGFQGMPGIGGSPGITGSKGDMGPPGVPGFQGPKGLPGLQGIKGDQGDQGVPGAKGLPGPPGPPGPYDIIKGEPGLPGPEGPPGLKGLQGLPGPKGQQGVTGLVGIPGPPGIPGFDGAPGQKGEMGPAGPTGPRGFPGPPGPDGLPGSMGPPGTPSVDHGFLVTRHSQTIDDPQCPSGTKILYHGYSLLYVQGNERAHGQDLGTAGSCLRKFSTMPFLFCNINNVCNFASRNDYSYWLSTPEPMPMSMAPITGENIRPFISRCAVCEAPAMVMAVHSQTIQIPPCPSGWSSLWIGYSFVMHTSAGAEGSGQALASPGSCLEEFRSAPFIECHGRGTCNYYANAYSFWLATIERSEMFKKPTPSTLKAGELRTHVSRCQVCMRRT</sequence>
<keyword id="KW-0002">3D-structure</keyword>
<keyword id="KW-0025">Alternative splicing</keyword>
<keyword id="KW-0037">Angiogenesis</keyword>
<keyword id="KW-0084">Basement membrane</keyword>
<keyword id="KW-0176">Collagen</keyword>
<keyword id="KW-0903">Direct protein sequencing</keyword>
<keyword id="KW-0225">Disease variant</keyword>
<keyword id="KW-1015">Disulfide bond</keyword>
<keyword id="KW-0272">Extracellular matrix</keyword>
<keyword id="KW-0325">Glycoprotein</keyword>
<keyword id="KW-0379">Hydroxylation</keyword>
<keyword id="KW-1267">Proteomics identification</keyword>
<keyword id="KW-1185">Reference proteome</keyword>
<keyword id="KW-0677">Repeat</keyword>
<keyword id="KW-0964">Secreted</keyword>
<keyword id="KW-0732">Signal</keyword>
<gene>
    <name evidence="36" type="primary">COL4A1</name>
</gene>
<organism>
    <name type="scientific">Homo sapiens</name>
    <name type="common">Human</name>
    <dbReference type="NCBI Taxonomy" id="9606"/>
    <lineage>
        <taxon>Eukaryota</taxon>
        <taxon>Metazoa</taxon>
        <taxon>Chordata</taxon>
        <taxon>Craniata</taxon>
        <taxon>Vertebrata</taxon>
        <taxon>Euteleostomi</taxon>
        <taxon>Mammalia</taxon>
        <taxon>Eutheria</taxon>
        <taxon>Euarchontoglires</taxon>
        <taxon>Primates</taxon>
        <taxon>Haplorrhini</taxon>
        <taxon>Catarrhini</taxon>
        <taxon>Hominidae</taxon>
        <taxon>Homo</taxon>
    </lineage>
</organism>
<protein>
    <recommendedName>
        <fullName evidence="32">Collagen alpha-1(IV) chain</fullName>
    </recommendedName>
    <component>
        <recommendedName>
            <fullName>Arresten</fullName>
        </recommendedName>
    </component>
</protein>